<organismHost>
    <name type="scientific">Bos taurus</name>
    <name type="common">Bovine</name>
    <dbReference type="NCBI Taxonomy" id="9913"/>
</organismHost>
<protein>
    <recommendedName>
        <fullName>Replicase polyprotein 1ab</fullName>
        <shortName>pp1ab</shortName>
    </recommendedName>
    <alternativeName>
        <fullName>ORF1ab polyprotein</fullName>
    </alternativeName>
    <component>
        <recommendedName>
            <fullName>Host translation inhibitor nsp1</fullName>
            <shortName>nsp1</shortName>
        </recommendedName>
        <alternativeName>
            <fullName>p28</fullName>
        </alternativeName>
    </component>
    <component>
        <recommendedName>
            <fullName>Non-structural protein 2</fullName>
            <shortName>nsp2</shortName>
        </recommendedName>
        <alternativeName>
            <fullName>p65</fullName>
        </alternativeName>
    </component>
    <component>
        <recommendedName>
            <fullName>Papain-like proteinase nsp3</fullName>
            <shortName>PL-PRO</shortName>
            <ecNumber>3.4.19.12</ecNumber>
            <ecNumber>3.4.22.-</ecNumber>
        </recommendedName>
        <alternativeName>
            <fullName>Non-structural protein 3</fullName>
            <shortName>nsp3</shortName>
        </alternativeName>
        <alternativeName>
            <fullName>p210</fullName>
        </alternativeName>
    </component>
    <component>
        <recommendedName>
            <fullName>Non-structural protein 4</fullName>
            <shortName>nsp4</shortName>
        </recommendedName>
        <alternativeName>
            <fullName>Peptide HD2</fullName>
        </alternativeName>
        <alternativeName>
            <fullName>p44</fullName>
        </alternativeName>
    </component>
    <component>
        <recommendedName>
            <fullName>3C-like proteinase nsp5</fullName>
            <shortName>3CL-PRO</shortName>
            <shortName>3CLp</shortName>
            <ecNumber>3.4.22.-</ecNumber>
        </recommendedName>
        <alternativeName>
            <fullName>M-PRO</fullName>
        </alternativeName>
        <alternativeName>
            <fullName>nsp5</fullName>
        </alternativeName>
        <alternativeName>
            <fullName>p27</fullName>
        </alternativeName>
    </component>
    <component>
        <recommendedName>
            <fullName>Non-structural protein 6</fullName>
            <shortName>nsp6</shortName>
        </recommendedName>
    </component>
    <component>
        <recommendedName>
            <fullName>Non-structural protein 7</fullName>
            <shortName>nsp7</shortName>
        </recommendedName>
        <alternativeName>
            <fullName>p10</fullName>
        </alternativeName>
    </component>
    <component>
        <recommendedName>
            <fullName>Non-structural protein 8</fullName>
            <shortName>nsp8</shortName>
        </recommendedName>
        <alternativeName>
            <fullName>p22</fullName>
        </alternativeName>
    </component>
    <component>
        <recommendedName>
            <fullName>Viral protein genome-linked nsp9</fullName>
        </recommendedName>
        <alternativeName>
            <fullName>Non-structural protein 9</fullName>
            <shortName>nsp9</shortName>
        </alternativeName>
        <alternativeName>
            <fullName>RNA-capping enzyme subunit nsp9</fullName>
        </alternativeName>
        <alternativeName>
            <fullName>p12</fullName>
        </alternativeName>
    </component>
    <component>
        <recommendedName>
            <fullName>Non-structural protein 10</fullName>
            <shortName>nsp10</shortName>
        </recommendedName>
        <alternativeName>
            <fullName>Growth factor-like peptide</fullName>
            <shortName>GFL</shortName>
        </alternativeName>
        <alternativeName>
            <fullName>p15</fullName>
        </alternativeName>
    </component>
    <component>
        <recommendedName>
            <fullName>RNA-directed RNA polymerase nsp12</fullName>
            <shortName>Pol</shortName>
            <shortName>RdRp</shortName>
            <ecNumber>2.7.7.48</ecNumber>
            <ecNumber>2.7.7.50</ecNumber>
        </recommendedName>
        <alternativeName>
            <fullName>nsp12</fullName>
        </alternativeName>
        <alternativeName>
            <fullName>p100</fullName>
        </alternativeName>
    </component>
    <component>
        <recommendedName>
            <fullName>Helicase nsp13</fullName>
            <shortName>Hel</shortName>
            <ecNumber>3.6.4.12</ecNumber>
            <ecNumber>3.6.4.13</ecNumber>
        </recommendedName>
        <alternativeName>
            <fullName>nsp13</fullName>
        </alternativeName>
        <alternativeName>
            <fullName>p67</fullName>
        </alternativeName>
    </component>
    <component>
        <recommendedName>
            <fullName>Guanine-N7 methyltransferase nsp14</fullName>
            <shortName>ExoN</shortName>
            <ecNumber>2.1.1.56</ecNumber>
            <ecNumber>3.1.13.-</ecNumber>
        </recommendedName>
        <alternativeName>
            <fullName>nsp14</fullName>
        </alternativeName>
    </component>
    <component>
        <recommendedName>
            <fullName>Uridylate-specific endoribonuclease nsp15</fullName>
            <ecNumber>4.6.1.-</ecNumber>
        </recommendedName>
        <alternativeName>
            <fullName>NendoU</fullName>
        </alternativeName>
        <alternativeName>
            <fullName>nsp15</fullName>
        </alternativeName>
        <alternativeName>
            <fullName>p35</fullName>
        </alternativeName>
    </component>
    <component>
        <recommendedName>
            <fullName>2'-O-methyltransferase nsp16</fullName>
            <ecNumber>2.1.1.57</ecNumber>
        </recommendedName>
        <alternativeName>
            <fullName>nsp16</fullName>
        </alternativeName>
    </component>
</protein>
<name>R1AB_CVBLU</name>
<proteinExistence type="inferred from homology"/>
<accession>P0C6W8</accession>
<accession>Q8V439</accession>
<accession>Q8V440</accession>
<gene>
    <name type="primary">rep</name>
    <name type="ORF">1a-1b</name>
</gene>
<comment type="function">
    <text evidence="2">The replicase polyprotein of coronaviruses is a multifunctional protein: it contains the activities necessary for the transcription of negative stranded RNA, leader RNA, subgenomic mRNAs and progeny virion RNA as well as proteinases responsible for the cleavage of the polyprotein into functional products.</text>
</comment>
<comment type="function">
    <molecule>Host translation inhibitor nsp1</molecule>
    <text evidence="2">Inhibits host translation by interacting with the 40S ribosomal subunit. The nsp1-40S ribosome complex further induces an endonucleolytic cleavage near the 5'UTR of host mRNAs, targeting them for degradation. Viral mRNAs are not susceptible to nsp1-mediated endonucleolytic RNA cleavage thanks to the presence of a 5'-end leader sequence and are therefore protected from degradation. By suppressing host gene expression, nsp1 facilitates efficient viral gene expression in infected cells and evasion from host immune response.</text>
</comment>
<comment type="function">
    <molecule>Non-structural protein 2</molecule>
    <text evidence="2">May play a role in the modulation of host cell survival signaling pathway by interacting with host PHB and PHB2. Indeed, these two proteins play a role in maintaining the functional integrity of the mitochondria and protecting cells from various stresses.</text>
</comment>
<comment type="function">
    <molecule>Papain-like proteinase nsp3</molecule>
    <text evidence="2">Responsible for the cleavages located at the N-terminus of the replicase polyprotein. In addition, PL-PRO possesses a deubiquitinating/deISGylating activity and processes both 'Lys-48'- and 'Lys-63'-linked polyubiquitin chains from cellular substrates. Participates together with nsp4 in the assembly of virally-induced cytoplasmic double-membrane vesicles necessary for viral replication. Antagonizes innate immune induction of type I interferon by blocking the phosphorylation, dimerization and subsequent nuclear translocation of host IRF3. Also prevents host NF-kappa-B signaling.</text>
</comment>
<comment type="function">
    <molecule>Non-structural protein 4</molecule>
    <text evidence="2">Participates in the assembly of virally-induced cytoplasmic double-membrane vesicles necessary for viral replication.</text>
</comment>
<comment type="function">
    <molecule>3C-like proteinase nsp5</molecule>
    <text evidence="2 9">Cleaves the C-terminus of replicase polyprotein at 11 sites. Recognizes substrates containing the core sequence [ILMVF]-Q-|-[SGACN]. Also able to bind an ADP-ribose-1''-phosphate (ADRP).</text>
</comment>
<comment type="function">
    <molecule>Non-structural protein 6</molecule>
    <text evidence="2">Plays a role in the initial induction of autophagosomes from host endoplasmic reticulum. Later, limits the expansion of these phagosomes that are no longer able to deliver viral components to lysosomes.</text>
</comment>
<comment type="function">
    <molecule>Non-structural protein 7</molecule>
    <text evidence="2">Forms a hexadecamer with nsp8 (8 subunits of each) that may participate in viral replication by acting as a primase. Alternatively, may synthesize substantially longer products than oligonucleotide primers.</text>
</comment>
<comment type="function">
    <molecule>Non-structural protein 8</molecule>
    <text evidence="2">Forms a hexadecamer with nsp7 (8 subunits of each) that may participate in viral replication by acting as a primase. Alternatively, may synthesize substantially longer products than oligonucleotide primers.</text>
</comment>
<comment type="function">
    <molecule>Viral protein genome-linked nsp9</molecule>
    <text evidence="3">Forms a primer, NSP9-pU, which is utilized by the polymerase for the initiation of RNA chains. Interacts with ribosome signal recognition particle RNA (SRP). Together with NSP8, suppress protein integration into the cell membrane, thereby disrupting host immune defenses.</text>
</comment>
<comment type="function">
    <molecule>Non-structural protein 10</molecule>
    <text evidence="2">Plays a pivotal role in viral transcription by stimulating both nsp14 3'-5' exoribonuclease and nsp16 2'-O-methyltransferase activities. Therefore plays an essential role in viral mRNAs cap methylation.</text>
</comment>
<comment type="function">
    <molecule>RNA-directed RNA polymerase nsp12</molecule>
    <text evidence="3">RNA-directed RNA polymerase that catalyzes the transcription of viral genomic and subgenomic RNAs. Acts in complex with nsp7 and nsp8 to transcribe both the minus and positive strands of genomic RNA. The kinase-like NiRAN domain of NSP12 attaches one or more nucleotides to the amino terminus of NSP9, forming a covalent RNA-protein intermediate that serves as transcription/replication primer. Subgenomic RNAs (sgRNAs) are formed by discontinuous transcription: The polymerase has the ability to pause at transcription-regulating sequences (TRS) and jump to the leader TRS, resulting in a major deletion. This creates a series of subgenomic RNAs that are replicated, transcribed and translated. In addition, Nsp12 is a subunit of the viral RNA capping enzyme that catalyzes the RNA guanylyltransferase reaction for genomic and sub-genomic RNAs. Subsequently, the NiRAN domain transfers RNA to GDP, and forms the core cap structure GpppA-RNA.</text>
</comment>
<comment type="function">
    <molecule>Helicase nsp13</molecule>
    <text evidence="2">Multi-functional protein with a zinc-binding domain in N-terminus displaying RNA and DNA duplex-unwinding activities with 5' to 3' polarity. Activity of helicase is dependent on magnesium.</text>
</comment>
<comment type="function">
    <molecule>Guanine-N7 methyltransferase nsp14</molecule>
    <text evidence="2">Plays a role in viral RNA synthesis through two distinct activities. The N7-guanine methyltransferase activity plays a role in the formation of the cap structure GpppA-RNA. The proofreading exoribonuclease reduces the sensitivity of the virus to RNA mutagens during replication. This activity acts on both ssRNA and dsRNA in a 3'-5' direction.</text>
</comment>
<comment type="function">
    <molecule>Uridylate-specific endoribonuclease nsp15</molecule>
    <text evidence="2">Plays a role in viral transcription/replication and prevents the simultaneous activation of host cell dsRNA sensors, such as MDA5/IFIH1, OAS, and PKR (By similarity). Acts by degrading the 5'-polyuridines generated during replication of the poly(A) region of viral genomic and subgenomic RNAs. Catalyzes a two-step reaction in which a 2'3'-cyclic phosphate (2'3'-cP) is first generated by 2'-O transesterification, which is then hydrolyzed to a 3'-phosphate (3'-P) (By similarity). If not degraded, poly(U) RNA would hybridize with poly(A) RNA tails and activate host dsRNA sensors (By similarity).</text>
</comment>
<comment type="function">
    <molecule>2'-O-methyltransferase nsp16</molecule>
    <text evidence="2">Methyltransferase that mediates mRNA cap 2'-O-ribose methylation to the 5'-cap structure of viral mRNAs. N7-methyl guanosine cap is a prerequisite for binding of nsp16. Therefore plays an essential role in viral mRNAs cap methylation which is essential to evade immune system.</text>
</comment>
<comment type="catalytic activity">
    <molecule>RNA-directed RNA polymerase nsp12</molecule>
    <reaction evidence="8">
        <text>RNA(n) + a ribonucleoside 5'-triphosphate = RNA(n+1) + diphosphate</text>
        <dbReference type="Rhea" id="RHEA:21248"/>
        <dbReference type="Rhea" id="RHEA-COMP:14527"/>
        <dbReference type="Rhea" id="RHEA-COMP:17342"/>
        <dbReference type="ChEBI" id="CHEBI:33019"/>
        <dbReference type="ChEBI" id="CHEBI:61557"/>
        <dbReference type="ChEBI" id="CHEBI:140395"/>
        <dbReference type="EC" id="2.7.7.48"/>
    </reaction>
</comment>
<comment type="catalytic activity">
    <molecule>Helicase nsp13</molecule>
    <reaction>
        <text>ATP + H2O = ADP + phosphate + H(+)</text>
        <dbReference type="Rhea" id="RHEA:13065"/>
        <dbReference type="ChEBI" id="CHEBI:15377"/>
        <dbReference type="ChEBI" id="CHEBI:15378"/>
        <dbReference type="ChEBI" id="CHEBI:30616"/>
        <dbReference type="ChEBI" id="CHEBI:43474"/>
        <dbReference type="ChEBI" id="CHEBI:456216"/>
        <dbReference type="EC" id="3.6.4.12"/>
    </reaction>
</comment>
<comment type="catalytic activity">
    <molecule>Helicase nsp13</molecule>
    <reaction>
        <text>ATP + H2O = ADP + phosphate + H(+)</text>
        <dbReference type="Rhea" id="RHEA:13065"/>
        <dbReference type="ChEBI" id="CHEBI:15377"/>
        <dbReference type="ChEBI" id="CHEBI:15378"/>
        <dbReference type="ChEBI" id="CHEBI:30616"/>
        <dbReference type="ChEBI" id="CHEBI:43474"/>
        <dbReference type="ChEBI" id="CHEBI:456216"/>
        <dbReference type="EC" id="3.6.4.13"/>
    </reaction>
</comment>
<comment type="catalytic activity">
    <molecule>Papain-like proteinase nsp3</molecule>
    <reaction>
        <text>Thiol-dependent hydrolysis of ester, thioester, amide, peptide and isopeptide bonds formed by the C-terminal Gly of ubiquitin (a 76-residue protein attached to proteins as an intracellular targeting signal).</text>
        <dbReference type="EC" id="3.4.19.12"/>
    </reaction>
</comment>
<comment type="catalytic activity">
    <molecule>2'-O-methyltransferase nsp16</molecule>
    <reaction evidence="2">
        <text>a 5'-end (N(7)-methyl 5'-triphosphoguanosine)-ribonucleoside in mRNA + S-adenosyl-L-methionine = a 5'-end (N(7)-methyl 5'-triphosphoguanosine)-(2'-O-methyl-ribonucleoside) in mRNA + S-adenosyl-L-homocysteine + H(+)</text>
        <dbReference type="Rhea" id="RHEA:67020"/>
        <dbReference type="Rhea" id="RHEA-COMP:17167"/>
        <dbReference type="Rhea" id="RHEA-COMP:17168"/>
        <dbReference type="ChEBI" id="CHEBI:15378"/>
        <dbReference type="ChEBI" id="CHEBI:57856"/>
        <dbReference type="ChEBI" id="CHEBI:59789"/>
        <dbReference type="ChEBI" id="CHEBI:156461"/>
        <dbReference type="ChEBI" id="CHEBI:167609"/>
        <dbReference type="EC" id="2.1.1.57"/>
    </reaction>
</comment>
<comment type="catalytic activity">
    <molecule>Uridylate-specific endoribonuclease nsp15</molecule>
    <reaction evidence="2">
        <text>uridylyl-uridylyl-ribonucleotide-RNA = a 3'-end uridylyl-2',3'-cyclophospho-uridine-RNA + a 5'-end dephospho-ribonucleoside-RNA</text>
        <dbReference type="Rhea" id="RHEA:67732"/>
        <dbReference type="Rhea" id="RHEA-COMP:13936"/>
        <dbReference type="Rhea" id="RHEA-COMP:17334"/>
        <dbReference type="Rhea" id="RHEA-COMP:17335"/>
        <dbReference type="ChEBI" id="CHEBI:138284"/>
        <dbReference type="ChEBI" id="CHEBI:173079"/>
        <dbReference type="ChEBI" id="CHEBI:173080"/>
    </reaction>
</comment>
<comment type="catalytic activity">
    <molecule>RNA-directed RNA polymerase nsp12</molecule>
    <reaction evidence="3">
        <text>a 5'-end diphospho-ribonucleoside in mRNA + GTP + H(+) = a 5'-end (5'-triphosphoguanosine)-ribonucleoside in mRNA + diphosphate</text>
        <dbReference type="Rhea" id="RHEA:67012"/>
        <dbReference type="Rhea" id="RHEA-COMP:17165"/>
        <dbReference type="Rhea" id="RHEA-COMP:17166"/>
        <dbReference type="ChEBI" id="CHEBI:15378"/>
        <dbReference type="ChEBI" id="CHEBI:33019"/>
        <dbReference type="ChEBI" id="CHEBI:37565"/>
        <dbReference type="ChEBI" id="CHEBI:167616"/>
        <dbReference type="ChEBI" id="CHEBI:167617"/>
        <dbReference type="EC" id="2.7.7.50"/>
    </reaction>
    <physiologicalReaction direction="left-to-right" evidence="3">
        <dbReference type="Rhea" id="RHEA:67013"/>
    </physiologicalReaction>
</comment>
<comment type="catalytic activity">
    <molecule>Guanine-N7 methyltransferase nsp14</molecule>
    <reaction evidence="2">
        <text>a 5'-end (5'-triphosphoguanosine)-ribonucleoside in mRNA + S-adenosyl-L-methionine = a 5'-end (N(7)-methyl 5'-triphosphoguanosine)-ribonucleoside in mRNA + S-adenosyl-L-homocysteine</text>
        <dbReference type="Rhea" id="RHEA:67008"/>
        <dbReference type="Rhea" id="RHEA-COMP:17166"/>
        <dbReference type="Rhea" id="RHEA-COMP:17167"/>
        <dbReference type="ChEBI" id="CHEBI:57856"/>
        <dbReference type="ChEBI" id="CHEBI:59789"/>
        <dbReference type="ChEBI" id="CHEBI:156461"/>
        <dbReference type="ChEBI" id="CHEBI:167617"/>
        <dbReference type="EC" id="2.1.1.56"/>
    </reaction>
    <physiologicalReaction direction="left-to-right" evidence="2">
        <dbReference type="Rhea" id="RHEA:67009"/>
    </physiologicalReaction>
</comment>
<comment type="cofactor">
    <molecule>Uridylate-specific endoribonuclease nsp15</molecule>
    <cofactor evidence="2">
        <name>Mn(2+)</name>
        <dbReference type="ChEBI" id="CHEBI:29035"/>
    </cofactor>
    <text evidence="2">Likely affects Nsp15 binding to RNA.</text>
</comment>
<comment type="cofactor">
    <molecule>RNA-directed RNA polymerase nsp12</molecule>
    <cofactor evidence="3">
        <name>Mg(2+)</name>
        <dbReference type="ChEBI" id="CHEBI:18420"/>
    </cofactor>
</comment>
<comment type="subunit">
    <molecule>Non-structural protein 2</molecule>
    <text evidence="2">Interacts with host PHB and PHB2.</text>
</comment>
<comment type="subunit">
    <molecule>Non-structural protein 4</molecule>
    <text evidence="2">Interacts with papain-like protease nsp3 and non-structural protein 6.</text>
</comment>
<comment type="subunit">
    <molecule>3C-like proteinase nsp5</molecule>
    <text evidence="2">Monomer. Homodimer. Only the homodimer shows catalytic activity.</text>
</comment>
<comment type="subunit">
    <molecule>Non-structural protein 7</molecule>
    <text evidence="3">Interacts with nsp8 and nsp12 to form the replication-transcription complex (RTC): nsp12, nsp7, two subunits of nsp8, and up to two subunits of nsp13.</text>
</comment>
<comment type="subunit">
    <molecule>Non-structural protein 8</molecule>
    <text evidence="3">Interacts with nsp7, nsp13 and nsp12 to form the replication-transcription complex (RTC): nsp12, nsp7, two subunits of nsp8, and up to two subunits of nsp13.</text>
</comment>
<comment type="subunit">
    <molecule>Viral protein genome-linked nsp9</molecule>
    <text evidence="3">Interacts with nsp12.</text>
</comment>
<comment type="subunit">
    <molecule>Non-structural protein 10</molecule>
    <text evidence="3">Interacts with proofreading exoribonuclease nsp14 and 2'-O-methyltransferase nsp16; these interactions enhance nsp14 and nsp16 enzymatic activities.</text>
</comment>
<comment type="subunit">
    <molecule>RNA-directed RNA polymerase nsp12</molecule>
    <text evidence="3">Interacts with nsp7 and nsp8 to form the replication-transcription complex (RTC): nsp12, nsp7, two subunits of nsp8, and up to two subunits of nsp13. Interacts with nsp9.</text>
</comment>
<comment type="subunit">
    <molecule>Helicase nsp13</molecule>
    <text evidence="3">Interacts with nsp8 to form the replication-transcription complex (RTC): nsp12, nsp7, two subunits of nsp8, and up to two subunits of nsp13.</text>
</comment>
<comment type="subcellular location">
    <molecule>Papain-like proteinase nsp3</molecule>
    <subcellularLocation>
        <location>Host membrane</location>
        <topology>Multi-pass membrane protein</topology>
    </subcellularLocation>
    <subcellularLocation>
        <location evidence="2">Host cytoplasm</location>
    </subcellularLocation>
</comment>
<comment type="subcellular location">
    <molecule>Non-structural protein 4</molecule>
    <subcellularLocation>
        <location>Host membrane</location>
        <topology>Multi-pass membrane protein</topology>
    </subcellularLocation>
    <subcellularLocation>
        <location>Host cytoplasm</location>
    </subcellularLocation>
    <text evidence="2">Localizes in virally-induced cytoplasmic double-membrane vesicles.</text>
</comment>
<comment type="subcellular location">
    <molecule>Non-structural protein 6</molecule>
    <subcellularLocation>
        <location evidence="35">Host membrane</location>
        <topology evidence="35">Multi-pass membrane protein</topology>
    </subcellularLocation>
</comment>
<comment type="subcellular location">
    <molecule>Non-structural protein 7</molecule>
    <subcellularLocation>
        <location evidence="1">Host cytoplasm</location>
        <location evidence="1">Host perinuclear region</location>
    </subcellularLocation>
    <text evidence="1">nsp7, nsp8, nsp9 and nsp10 are localized in cytoplasmic foci, largely perinuclear. Late in infection, they merge into confluent complexes (By similarity).</text>
</comment>
<comment type="subcellular location">
    <molecule>Non-structural protein 8</molecule>
    <subcellularLocation>
        <location evidence="1">Host cytoplasm</location>
        <location evidence="1">Host perinuclear region</location>
    </subcellularLocation>
    <text evidence="1">nsp7, nsp8, nsp9 and nsp10 are localized in cytoplasmic foci, largely perinuclear. Late in infection, they merge into confluent complexes (By similarity).</text>
</comment>
<comment type="subcellular location">
    <molecule>Viral protein genome-linked nsp9</molecule>
    <subcellularLocation>
        <location evidence="1">Host cytoplasm</location>
        <location evidence="1">Host perinuclear region</location>
    </subcellularLocation>
    <text evidence="1">nsp7, nsp8, nsp9 and nsp10 are localized in cytoplasmic foci, largely perinuclear. Late in infection, they merge into confluent complexes (By similarity).</text>
</comment>
<comment type="subcellular location">
    <molecule>Non-structural protein 10</molecule>
    <subcellularLocation>
        <location evidence="1">Host cytoplasm</location>
        <location evidence="1">Host perinuclear region</location>
    </subcellularLocation>
    <text evidence="1">nsp7, nsp8, nsp9 and nsp10 are localized in cytoplasmic foci, largely perinuclear. Late in infection, they merge into confluent complexes (By similarity).</text>
</comment>
<comment type="subcellular location">
    <molecule>Helicase nsp13</molecule>
    <subcellularLocation>
        <location evidence="35">Host endoplasmic reticulum-Golgi intermediate compartment</location>
    </subcellularLocation>
    <text evidence="1">The helicase interacts with the N protein in membranous complexes and colocalizes with sites of synthesis of new viral RNA.</text>
</comment>
<comment type="subcellular location">
    <molecule>Uridylate-specific endoribonuclease nsp15</molecule>
    <subcellularLocation>
        <location evidence="1">Host cytoplasm</location>
        <location evidence="1">Host perinuclear region</location>
    </subcellularLocation>
</comment>
<comment type="alternative products">
    <event type="ribosomal frameshifting"/>
    <isoform>
        <id>P0C6W8-1</id>
        <name>Replicase polyprotein 1ab</name>
        <name>pp1ab</name>
        <sequence type="displayed"/>
    </isoform>
    <isoform>
        <id>P0C6T9-1</id>
        <name>Replicase polyprotein 1a</name>
        <name>pp1a</name>
        <name>ORF1a polyprotein</name>
        <sequence type="external"/>
    </isoform>
</comment>
<comment type="domain">
    <text>The hydrophobic domains (HD) could mediate the membrane association of the replication complex and thereby alter the architecture of the host cell membrane.</text>
</comment>
<comment type="PTM">
    <text evidence="1">Specific enzymatic cleavages in vivo by its own proteases yield mature proteins. 3CL-PRO and PL-PRO proteinases are autocatalytically processed (By similarity).</text>
</comment>
<comment type="miscellaneous">
    <molecule>Isoform Replicase polyprotein 1ab</molecule>
    <text>Produced by -1 ribosomal frameshifting at the 1a-1b genes boundary.</text>
</comment>
<comment type="similarity">
    <text evidence="35">Belongs to the coronaviruses polyprotein 1ab family.</text>
</comment>
<comment type="sequence caution" evidence="35">
    <conflict type="erroneous gene model prediction">
        <sequence resource="EMBL-CDS" id="AAL57305"/>
    </conflict>
</comment>
<sequence length="7094" mass="797341">MSKINKYGLELHWAPEFPWMFEDAEEKLDNPSSSEVDIVCSTTAQKLETGGICPENHVMVDCRRLLKQECCVQSSLIREIVMNTRPYDLEVLLQDALQSREAVLVTPPLGMSLEACYVRGCNPNGWTMGLFRRRSVCNTGRCAVNKHVAYQLYMIDPAGVCFGAGQFVGWVIPLAFMPVQSRKFIVPWVMYLRKCGEKGAYNKDHKRGGFEHVYNFKVEDAYDLVHDEPKGKFSKKAYALIRGYRGVKPLLYVDQYGCDYTGGLADGLEAYADKTLQEMKALFPIWSQELPFDVTVAWHVVRDPRYVMRLQSASTIRSVAYVANPTEDLCDGSVVIKEPVHVYADDSIILRQHNLVDIMSCFYMEADAVVNAFYGVDLKDCGFVMQFGYIDCEQDLCDFKGWVPGNMIDGFACTTCGHVYETGDLLAQSSGVLPVNPVLHTKSAAGYGGFGCKDSFTLYGQTVVYFGGCVYWSPARNIWIPILKSSVKSYDGLVYTGVVGCKAIVKETNLICKALYLDYVQHKCGNLHQRELLGVSDVWHKQLLLNRGVYKPLLENIDYFNMRRAKFSLETFTVCADGFMPFLLDDLVPRAYYLAVSGQAFCDYADKICHAVVSKSKELLDVSLDSLSAAIHYLNSKIVDLAQHFSDFGTSFVSKIVHFFKTFTTSTALAFAWVLFHVLHGAYIVVESDIYFVKNIPRYASAVAQAFRSVAKVVLDSLRVTFIDGLSCFKIGRRRICLSGSKIYEVERGLLHSSQLPLDVYDLTMPSQVQKAKQKPIYLKGSGSDFSLADSVVEVVTTSLTPCGYSEPPKVADKICIVDNVYMAKAGDKYYPVVVDGHVGLLDQAWRVPCAGRRVTFKEQPTVNEIASTPKTIKVFYELDKDFNTILNTACGVFEVDDTVDMEEFYAVVVDAIEEKLSPCKELEGVGAKVSAFLQKLEDNSLFLFDEAGEEVLASKLYCAFTAPEDDDFLEESGVEEDDVEGEETDLTVTSAGEPCVASEQEESSEILEDTLDDGPCVETSDSQVEEDVEMSDFADLESVIQDYENVCFEFYTTEPEFVKVLDLYVPKATRNNCWLRSVLAVMQKLPCQFKDKNLQDLWVLYKQQYSQLFVDTLVNKIPANIVVPQGGYVADFAYWFLTLCDWQCVAYWKCIKCDLALKLKGLDAMFFYGDVVSHVCKCGESMVLIDVDVPFTAHFALKDKLFCAFITKRSVYKAACVVDVNDSHSMAVVDGKQIDDHRVTSITSDKFDFIIGHGMSFSMTTFEIAQLYGSCITPNVCFVKGDIIKVSKRVKAEVVVNPANGHMAHGGGVAKAIAVAAGQQFVKETTDMVKSKGVCATGDCYVSTGGKLCKTVLNVVGPDARTQGKQSYALLERVYKHLNKYDCVVTTLISAGIFSVPSDVSLTYLLGTAEKQVVLVSNNQEDFDLISKCQITAVEGTKKLAERLSFNVGRSIVYETDANKLILSNDVAFVSTFNVLQDVLSLRHDIALDDDARTFVQSNVDVVPEGWRVVNKFYQINGVRTVKYFECPGGIDICSQDKVFGYVQQGSFNKATVAQIKALFLDKVDILLTVDGVNFTNRFVPVGENFGKSLGNVFCDGVNVTKHKCDINYKGKVFFQFDNLSSEDLKAVRSSFNFDQKELLAYYNMLVNCSKWQVVFNGKYFTFKQANNNCFVNVSCLMLQSLNLKFKIVQWQEAWLEFRSGRPARFVSLVLAKGGFKFGDPADSRDFLRVVFSQVDLTGAICDFEIACKCGVKQEQRTGVDAVMHFGTLSREDLEIGYTVDCSCGKKLIHCVRFDVPFLICSNTPASVKLPKGVGSANIFKGDKVGHYVHVKCEQSYQLYDASNVKKVTDVTGNLSDCLYLKNLKQTFKSVLTTYYLDDVKKIEYKPDLSQYYCDGGKYYTQRIIKAQFKTFEKVDGVYTNFKLIGHTICDILNAKLGFDSSKEFVEYKVTEWPTATGDVVLATDDLYVKRYERGCITFGKPVIWLSHEQASLNSLTYFNRPLLVDENKFDVLKVDDVDDGGDISESDAKESKEINIIKLSGVKKPFKVEDSVIVNDDTSEIKYVKSLSIVDVYDMWLTGCRYVVRTANDLSMAVNVPTIRKFIKFGMTLVSIPIDLLNLREIKPVFNVVKAVRNKISACFNFIKWLFVLLFGWIKISADNKVIYTTEVASKLTCKLVALAFKNAFLTFKWSVVARGACIIATIFLLWFNFIYANVIFSDFYLPKIGFLPTFVGKIAQWIKSTFSLVTICDLYSIQDVGFKNQYCNGSIACQFCLAGFDMLDNYKAIDVVQYEADRRAFVDYTGVLKIVIELIVSYALYTAWFYPLFALISIQILTTWLPELFMLSTLHWSVRLLVSLANMLPAHVFMRFYIIIASFIKLFSLFRHVAYGCSKPGCLFCYKRNRSLRVKCSTIVGGMIRYYDVMANGGTGFCSKHQWNCIDCDSYKPGNTFITVEAALDLSKELKRPIQPTDVAYHTVTDVKQVGCYMRLFYERDGQRTYDDVNASLFVDYSNLLHSKVKGVPNMHVVVVENDADKANFLNAAVFYAQSLFRPILMVDKNLITTANTGTSVTETMFDVYVDTFLSMFDVDKKSLNALIATAHSSIKQGTQICKVLDTFLSCARKSCSIDSDVDTKCLADSVMSAVSAGLELTDESCNNLVPTYLKGDNIVAADLGVLIQNSAKHVQGNVAKIAGVSCIWSVDAFNQLSSDFQHKLKKACCKTGLKLKLTYNKQMANVSVLTTPFSLKGGAVFSYFVYVCFLLSLVCFIGLWCLMPTYTVHKSDFQLPVYTSYKVLDNGVIRDVSVEDVCFANKFEQFDQWYESTFGLSYYSNSMACPIVVAVVDQDLGSTVFNVPTKVLRYGYHVLHFITHALSADGVQCYTPHSQISYSNFYASGCVLSSACTMFAMADGSPQPYCYTEGLMQNASLYSSLVPHVRYNLANAKGFIRFPEVLREGLVRIVRTRSMSYCRVGLCEEADEGICFNFNGSWVLNNDYYRSLPGTFCGRDVFDLIYQLFKGLAQPVDFLALTASSIAGAILAVIVVLVFYYLIKLKRAFGDYTSIVFVNVIVWCVNFMMLFVFQVYPTLSCVYAICYFYATLYFPSEISVIMHLQWLVMYGTIMPLWFCLLYISVVVSNHAFWVFAYCRRLGTSVRSDGTFEEMALTTFMITKDSYCKLKNSLSDVAFNRYLSLYNKYRYYSGKMDTAAYREAACSQLAKAMDTFTNNNGSDVLYQPPTASVSTSFLQSGIVKMVNPTSKVEPCIVSVTYGNMTLNGLWLDDKVYCPRHVICSASDMTNPDYTNLLCRVTSSDFTVLFDRLSLTVMSYQMQGCMLVLTVTLQNSRTPKYTFGVVKPGETFTVLAAYNGKPQGAFHVTMRSSYTIKGSFLCGSCGSVGYVLMGDCVKFVYMHQLELSTGCHTGTDFNGDFYGPYKDAQVVQLPVQDYIQSVNFVAWLYAAILNNCNWFVQSDKCSVEDFNVWALSNGFSQVKSDLVIDALASMTGVSLETLLAAIKRLKNGFQGRQIMGSCSFEDELTPSDVYQQLAGIKLQSKRTRLVKGIVCWIMASTFLFSCIITAFVKWTMFMYVTTNMLSITFCALCVISLAMLLVKHKHLYLTMYIIPVLFTLLYNNYLVVYKQTFRGYVYAWLSYYVPSVEYTYTDEVIYGMLLLIGMVFVTLRSINHDLFSFIMFVGRVISVVSLWYMGSNLEEEILLMLASLFGTYTWTTALSMAAAKVIAKWVAVNVLYFTDIPQIKIVLVCYLFIGYIISCYWGLFSLMNSLFRMPLGVYNYKISVQELRYMNANGLRPPKNSFEALMLNFKLLGIGGVPIIEVSQFQSKLTDVKCANVVLLNCLQHLHVASNSKLWQYCSTLHNEILATSDLGVAFEKLAQLLIVLFANPAAVDSKCLTSIEEVCDDYAKDNTVLQALQSEFVNMASFVEYEVAKKNLDEARSSGSANQQQLKQLEKACNIAKSAYERDRAVARKLERMADLALTNMYKEARINDKKSKVVSALQTMLFSMVRKLDNQALNSILDNAVKGCVPLNAIPSLAANTLTIIVPDKSVYDQVVDNVYVTYAGNVWQIQTIQDSDGTNKQLNEISDDCNWPLVIIANRHNEVSATVLQNNELMPAKLKTQVVNSGPDQTCNTPTQCYYNNSNNGKIVYAILSDVDGLKYTKILKDDGNFVVLELDPPCKFTVQDVKGLKIKYLYFVKGCNTLARGWVVGTISSTVRLQAGTATEYASNSSILSLCAFSVDPKKTYLDFIQQGGTPIANCVKMLCDHAGTGMAITVKPDATTNQDSYGGASVCIYCRARVEHPDVDGLCKLRGKFVQVPVGIKDPVSYVLTHDVCQVCGFWRDGSCSCVSTDTTVQSKDTNFLNRVRGTSVDARLVPCASGLSTDVQLRAFDICNASVAGIGLHLKVNCCRFQRVDENGDKLDQFFVVKRTDLTIYNREMECYERVKDCKFVAEHDFFTFDVEGSRVPHIVRKDLTKYTMLDLCYALRHFDRNDCMLLCDILSIYAGCEQSYFTKKDWYDFVENPDIINVYKKLGPIFNRALVSATEFADKLVEVGLVGILTLDNQDLNGKWYDFGDYVIAAPGCGVAIADSYYSYMMPMLTMCHALDCELYVNNAYRLFDLVQYDFTDYKLELFNKYFKHWSMPYHPNTVDCQDDRCIIHCANFNILFSMVLPNTCFGPLVRQIFVDGVPFVVSIGYHYKELGIVMNMDVDTHRYRLSLKDLLLYAADPALHVASASALYDLRTCCFSVAAITSGVKFQTVKPGNFNQDFYDFILSKGLLKEGSSVDLKHFFFTQDGNAAITDYNYYKYNLPTMVDIKQLLFVLEVVYKYFEIYDGGCIPASQVIVNNYDKSAGYPFNKFGKARLYYEALSFEEQDEIYAYTKRNVLPTLTQMNLKYAISAKNRARTVAGVSILSTMTGRMFHQKCLKSIAATRGVPVVIGTTKFYGGWDDMLRRLIKDVDNPVLMGWDYPKCDRAMPNILRIVSSLVLARKHEACCSQSDRFYRLANECAQVLSEIVMCGGCYYVKPGGTSSGDATTAFANSVFNICQAVSANVCALMSCNGNKIEDLSIRALQKRLYSHVYRSDMVDSTFVTEYYEFLNKHFSMMILSDDGVVCYNSDYASKGYIANISAFQQVLYYQNNVFMSESKCWVENDINNGPHEFCSQHTMLVKMDGDDVYLPYPDPSRILGAGCFVDDLLKTDSVLLIERFVSLAIDAYPLVYHENEEYQKVFRVYLEYIKKLYNDLGNQILDSYSVILSTCDGQKFTDESFYKNMYLRSAVMQSVGACVVCSSQTSLRCGSCIRKPLLCCKCCYDHVMATDHKYVLSVSPYVCNAPGCDVNDVTKLYLGGMSYYCEDHKPQYSFKLVMNGMVFGLYKQSCTGSPYIDDFNRIASCKWTDVDDYILANECTERLKLFAAETQKATEEAFKQSYASATIQEIVSERELILSWEIGKVKPPLNKNYVFTGYHFTKNGKTVLGEYVFDKSELTNGVYYRATTTYKLSVGDVFVLTSHSVANLSAPTLVPQENYSSIRFASVYSVLETFQNNVVNYQHIGMKRYCTVQGPPGTGKSHLAIGLAVYYCTARVVYTAASHAAVDALCEKAYKFLNINDCTRIVPAKVRVECYDKFKINDTTRKYVFTTINALPEMVTDIVVVDEVSMLTNYELSVINARIRAKHYVYIGDPAQLPAPRVLLSKGTLEPKYFNTVTKLMCCLGPDIFLGTCYRCPKEIVDTVSALVYENKLKAKNESSSLCFKVYYKGVTTHESSSAVNMQQIYLINKFLKANPLWHKAVFISPYNSQNFAAKRVLGLQTQTVDSAQGSEYDYVIYSQTAETAHSVNVNRFNVAITRAKKGILCVMSNMQLFEALQFTTLTLDKVPQAVETRVQCSTNLFKDCSKSYSGYHPAHAPSFLAVDDKYKATGDLAVCLGIGDSAVTYSRLISLMGFKLDVTLDGYCKLFITKEEAVKRVRAWVGFDAEGAHATRDSIGTNFPLQLGFSTGIDFVVEATGLFADRDGYSFKKAVAKAPPGEQFKHLIPLMTRGQRWDVVRPRIVQMFADHLIDLSDCVVLVTWAANFELTCLRYFAKVGREISCNVCTKRATAYNSRTGYYGCWRHSVTCDYLYNPLIVDIQQWGYIGSLSSNHDLYCSVHKGAHVASSDAIMTRCLAVYDCFCNNINWNVEYPIISNELSINTSCRVLQRVMLKAAMLCNRYTLCYDIGNPKAIACVKDFDFKFYDAQPIVKSVKTLLYSFEAHKDSFKDGLCMFWNCNVDKYPPNAVVCRFDTRVLNNLNLPGCNGGSLYVNKHAFHTKPFSRAAFEHLKPMPFFYYSDTPCVYMDGMDAKQVDYVPLKSATCITRCNLGGAVCLKHAEEYREYLESYNTATTAGFTFWVYKTFDFYNLWNTFTKLQSLENVVYNLVKTGHYTGQAGEMPCAIINDKVVAKIDKEDVVIFINNTTYPTNVAVELFAKRSIRHHPELKLFRNLNIDVCWKHVIWDYARESIFCSNTYGVCMYTDLKFIDKLNVLFDGRDNGALEAFKRSNNGVYISTTKVKSLSMIKGPPRAELNGVVVDKVGDTDCVFYFAVRKEGQDVIFSQFDSLRVSSNQSPQGNLGSNEPGNVGGNDALATSTIFTQSRVISSFTCRTDMEKDFIALDQDLFIQKYGLEDYAFEHIVYGNFNQKIIGGLHLLIGLYRRQQTSNLVIQEFVSYDSSIHSYFITDEKSGGSKSVCTVIDILLDDFVALVKSLNLNCVSKVVNVNVDFKDFQFMLWCNDEKVMTFYPRLQAASDWKPGYSMPVLYKYLNSPMERVSLWNYGKPVTLPTGCMMNVAKYTQLCQYLNTTTLAVPVNMRVLHLGAGSEKGVAPGSAVLRQWLPAGTILVDNDLYPFVSDSVATYFGDCITLPFDCQWDLIISDMYDPITKNIGEYNVSKDGFFTYICHMIRDKLALGGSVAIKITEFSWNAELYKLMGYFAFWTVFCTNANASSSEGFLIGINYLGKPKVEIDGNVMHANYLFWRNSTVWNGGAYSLFDMAKFPLKLAGTAVINLRADQINDMVYSLLEKGKLLVRDTNKEVFVGDSLVNVI</sequence>
<feature type="chain" id="PRO_0000037244" description="Host translation inhibitor nsp1" evidence="2">
    <location>
        <begin position="1"/>
        <end position="246"/>
    </location>
</feature>
<feature type="chain" id="PRO_0000037245" description="Non-structural protein 2" evidence="2">
    <location>
        <begin position="247"/>
        <end position="851"/>
    </location>
</feature>
<feature type="chain" id="PRO_0000037246" description="Papain-like proteinase nsp3" evidence="2">
    <location>
        <begin position="852"/>
        <end position="2750"/>
    </location>
</feature>
<feature type="chain" id="PRO_0000037247" description="Non-structural protein 4" evidence="2">
    <location>
        <begin position="2751"/>
        <end position="3246"/>
    </location>
</feature>
<feature type="chain" id="PRO_0000037248" description="3C-like proteinase nsp5" evidence="2">
    <location>
        <begin position="3247"/>
        <end position="3549"/>
    </location>
</feature>
<feature type="chain" id="PRO_0000037249" description="Non-structural protein 6" evidence="2">
    <location>
        <begin position="3550"/>
        <end position="3836"/>
    </location>
</feature>
<feature type="chain" id="PRO_0000037250" description="Non-structural protein 7" evidence="2">
    <location>
        <begin position="3837"/>
        <end position="3925"/>
    </location>
</feature>
<feature type="chain" id="PRO_0000037251" description="Non-structural protein 8" evidence="2">
    <location>
        <begin position="3926"/>
        <end position="4122"/>
    </location>
</feature>
<feature type="chain" id="PRO_0000037252" description="Viral protein genome-linked nsp9" evidence="2">
    <location>
        <begin position="4123"/>
        <end position="4232"/>
    </location>
</feature>
<feature type="chain" id="PRO_0000037253" description="Non-structural protein 10" evidence="2">
    <location>
        <begin position="4233"/>
        <end position="4369"/>
    </location>
</feature>
<feature type="chain" id="PRO_0000037254" description="RNA-directed RNA polymerase nsp12" evidence="2">
    <location>
        <begin position="4370"/>
        <end position="5297"/>
    </location>
</feature>
<feature type="chain" id="PRO_0000037255" description="Helicase nsp13" evidence="2">
    <location>
        <begin position="5298"/>
        <end position="5900"/>
    </location>
</feature>
<feature type="chain" id="PRO_0000037256" description="Guanine-N7 methyltransferase nsp14" evidence="2">
    <location>
        <begin position="5901"/>
        <end position="6421"/>
    </location>
</feature>
<feature type="chain" id="PRO_0000037257" description="Uridylate-specific endoribonuclease nsp15" evidence="2">
    <location>
        <begin position="6422"/>
        <end position="6795"/>
    </location>
</feature>
<feature type="chain" id="PRO_0000037258" description="2'-O-methyltransferase nsp16" evidence="2">
    <location>
        <begin position="6796"/>
        <end position="7094"/>
    </location>
</feature>
<feature type="transmembrane region" description="Helical" evidence="4">
    <location>
        <begin position="2138"/>
        <end position="2158"/>
    </location>
</feature>
<feature type="transmembrane region" description="Helical" evidence="4">
    <location>
        <begin position="2199"/>
        <end position="2219"/>
    </location>
</feature>
<feature type="transmembrane region" description="Helical" evidence="4">
    <location>
        <begin position="2227"/>
        <end position="2247"/>
    </location>
</feature>
<feature type="transmembrane region" description="Helical" evidence="4">
    <location>
        <begin position="2313"/>
        <end position="2333"/>
    </location>
</feature>
<feature type="transmembrane region" description="Helical" evidence="4">
    <location>
        <begin position="2343"/>
        <end position="2363"/>
    </location>
</feature>
<feature type="transmembrane region" description="Helical" evidence="4">
    <location>
        <begin position="2365"/>
        <end position="2385"/>
    </location>
</feature>
<feature type="transmembrane region" description="Helical" evidence="4">
    <location>
        <begin position="2752"/>
        <end position="2772"/>
    </location>
</feature>
<feature type="transmembrane region" description="Helical" evidence="4">
    <location>
        <begin position="2824"/>
        <end position="2844"/>
    </location>
</feature>
<feature type="transmembrane region" description="Helical" evidence="4">
    <location>
        <begin position="3009"/>
        <end position="3029"/>
    </location>
</feature>
<feature type="transmembrane region" description="Helical" evidence="4">
    <location>
        <begin position="3031"/>
        <end position="3051"/>
    </location>
</feature>
<feature type="transmembrane region" description="Helical" evidence="4">
    <location>
        <begin position="3063"/>
        <end position="3083"/>
    </location>
</feature>
<feature type="transmembrane region" description="Helical" evidence="4">
    <location>
        <begin position="3090"/>
        <end position="3110"/>
    </location>
</feature>
<feature type="transmembrane region" description="Helical" evidence="4">
    <location>
        <begin position="3115"/>
        <end position="3135"/>
    </location>
</feature>
<feature type="transmembrane region" description="Helical" evidence="4">
    <location>
        <begin position="3558"/>
        <end position="3578"/>
    </location>
</feature>
<feature type="transmembrane region" description="Helical" evidence="4">
    <location>
        <begin position="3588"/>
        <end position="3608"/>
    </location>
</feature>
<feature type="transmembrane region" description="Helical" evidence="4">
    <location>
        <begin position="3614"/>
        <end position="3634"/>
    </location>
</feature>
<feature type="transmembrane region" description="Helical" evidence="4">
    <location>
        <begin position="3657"/>
        <end position="3677"/>
    </location>
</feature>
<feature type="transmembrane region" description="Helical" evidence="4">
    <location>
        <begin position="3684"/>
        <end position="3704"/>
    </location>
</feature>
<feature type="transmembrane region" description="Helical" evidence="4">
    <location>
        <begin position="3711"/>
        <end position="3731"/>
    </location>
</feature>
<feature type="transmembrane region" description="Helical" evidence="4">
    <location>
        <begin position="3755"/>
        <end position="3775"/>
    </location>
</feature>
<feature type="domain" description="CoV Nsp1 globular" evidence="26">
    <location>
        <begin position="54"/>
        <end position="196"/>
    </location>
</feature>
<feature type="domain" description="BetaCoV Nsp1 C-terminal" evidence="27">
    <location>
        <begin position="216"/>
        <end position="246"/>
    </location>
</feature>
<feature type="domain" description="CoV Nsp2 N-terminal" evidence="28">
    <location>
        <begin position="250"/>
        <end position="519"/>
    </location>
</feature>
<feature type="domain" description="CoV Nsp2 middle" evidence="29">
    <location>
        <begin position="524"/>
        <end position="713"/>
    </location>
</feature>
<feature type="domain" description="CoV Nsp2 C-terminal" evidence="30">
    <location>
        <begin position="733"/>
        <end position="851"/>
    </location>
</feature>
<feature type="domain" description="Ubiquitin-like 1" evidence="5">
    <location>
        <begin position="853"/>
        <end position="966"/>
    </location>
</feature>
<feature type="domain" description="Peptidase C16 1" evidence="6">
    <location>
        <begin position="1036"/>
        <end position="1274"/>
    </location>
</feature>
<feature type="domain" description="Macro" evidence="7">
    <location>
        <begin position="1275"/>
        <end position="1435"/>
    </location>
</feature>
<feature type="domain" description="DPUP" evidence="11">
    <location>
        <begin position="1491"/>
        <end position="1563"/>
    </location>
</feature>
<feature type="domain" description="Ubiquitin-like 2" evidence="5">
    <location>
        <begin position="1562"/>
        <end position="1617"/>
    </location>
</feature>
<feature type="domain" description="Peptidase C16 2" evidence="6">
    <location>
        <begin position="1631"/>
        <end position="1892"/>
    </location>
</feature>
<feature type="domain" description="Nucleic acid-binding" evidence="12">
    <location>
        <begin position="1906"/>
        <end position="2007"/>
    </location>
</feature>
<feature type="domain" description="G2M" evidence="33">
    <location>
        <begin position="2020"/>
        <end position="2169"/>
    </location>
</feature>
<feature type="domain" description="3Ecto" evidence="32">
    <location>
        <begin position="2235"/>
        <end position="2296"/>
    </location>
</feature>
<feature type="domain" description="CoV Nsp3 Y" evidence="31">
    <location>
        <begin position="2383"/>
        <end position="2750"/>
    </location>
</feature>
<feature type="domain" description="Nsp4C" evidence="13">
    <location>
        <begin position="3149"/>
        <end position="3246"/>
    </location>
</feature>
<feature type="domain" description="Peptidase C30" evidence="9">
    <location>
        <begin position="3247"/>
        <end position="3549"/>
    </location>
</feature>
<feature type="domain" description="RdRp Nsp7 cofactor" evidence="16">
    <location>
        <begin position="3837"/>
        <end position="3925"/>
    </location>
</feature>
<feature type="domain" description="RdRp Nsp8 cofactor" evidence="17">
    <location>
        <begin position="3926"/>
        <end position="4122"/>
    </location>
</feature>
<feature type="domain" description="Nsp9 ssRNA-binding" evidence="18">
    <location>
        <begin position="4123"/>
        <end position="4232"/>
    </location>
</feature>
<feature type="domain" description="ExoN/MTase coactivator" evidence="19">
    <location>
        <begin position="4233"/>
        <end position="4370"/>
    </location>
</feature>
<feature type="domain" description="NiRAN" evidence="14">
    <location>
        <begin position="4375"/>
        <end position="4630"/>
    </location>
</feature>
<feature type="domain" description="Nsp12 Interface" evidence="34">
    <location>
        <begin position="4631"/>
        <end position="4729"/>
    </location>
</feature>
<feature type="domain" description="Nsp12 RNA-dependent RNA polymerase" evidence="15">
    <location>
        <begin position="4730"/>
        <end position="5297"/>
    </location>
</feature>
<feature type="domain" description="RdRp catalytic" evidence="8">
    <location>
        <begin position="4977"/>
        <end position="5139"/>
    </location>
</feature>
<feature type="domain" description="CV ZBD" evidence="10">
    <location>
        <begin position="5298"/>
        <end position="5410"/>
    </location>
</feature>
<feature type="domain" description="(+)RNA virus helicase ATP-binding">
    <location>
        <begin position="5553"/>
        <end position="5734"/>
    </location>
</feature>
<feature type="domain" description="(+)RNA virus helicase C-terminal">
    <location>
        <begin position="5735"/>
        <end position="5904"/>
    </location>
</feature>
<feature type="domain" description="ExoN" evidence="20">
    <location>
        <begin position="5971"/>
        <end position="6186"/>
    </location>
</feature>
<feature type="domain" description="N7-MTase" evidence="21">
    <location>
        <begin position="6195"/>
        <end position="6421"/>
    </location>
</feature>
<feature type="domain" description="Nsp15 N-terminal oligomerization" evidence="24">
    <location>
        <begin position="6422"/>
        <end position="6482"/>
    </location>
</feature>
<feature type="domain" description="AV-Nsp11N/CoV-Nsp15M" evidence="25">
    <location>
        <begin position="6483"/>
        <end position="6603"/>
    </location>
</feature>
<feature type="domain" description="NendoU" evidence="23">
    <location>
        <begin position="6653"/>
        <end position="6792"/>
    </location>
</feature>
<feature type="domain" description="Nidovirus-type SAM-dependent 2'-O-MTase" evidence="22">
    <location>
        <begin position="6797"/>
        <end position="7091"/>
    </location>
</feature>
<feature type="zinc finger region" description="C4-type 1" evidence="6">
    <location>
        <begin position="1151"/>
        <end position="1179"/>
    </location>
</feature>
<feature type="zinc finger region" description="C4-type 2" evidence="6">
    <location>
        <begin position="1749"/>
        <end position="1785"/>
    </location>
</feature>
<feature type="zinc finger region" evidence="1">
    <location>
        <begin position="4306"/>
        <end position="4322"/>
    </location>
</feature>
<feature type="zinc finger region" evidence="1">
    <location>
        <begin position="4348"/>
        <end position="4361"/>
    </location>
</feature>
<feature type="region of interest" description="C4" evidence="28">
    <location>
        <begin position="392"/>
        <end position="416"/>
    </location>
</feature>
<feature type="region of interest" description="HD1">
    <location>
        <begin position="2138"/>
        <end position="2385"/>
    </location>
</feature>
<feature type="region of interest" description="Y1" evidence="31">
    <location>
        <begin position="2383"/>
        <end position="2473"/>
    </location>
</feature>
<feature type="region of interest" description="ZF1" evidence="31">
    <location>
        <begin position="2387"/>
        <end position="2400"/>
    </location>
</feature>
<feature type="region of interest" description="ZF2" evidence="31">
    <location>
        <begin position="2433"/>
        <end position="2443"/>
    </location>
</feature>
<feature type="region of interest" description="CoV-Y" evidence="31">
    <location>
        <begin position="2474"/>
        <end position="2750"/>
    </location>
</feature>
<feature type="region of interest" description="Y2" evidence="31">
    <location>
        <begin position="2474"/>
        <end position="2566"/>
    </location>
</feature>
<feature type="region of interest" description="Y3" evidence="31">
    <location>
        <begin position="2567"/>
        <end position="2649"/>
    </location>
</feature>
<feature type="region of interest" description="Y4" evidence="31">
    <location>
        <begin position="2650"/>
        <end position="2750"/>
    </location>
</feature>
<feature type="region of interest" description="HD2">
    <location>
        <begin position="2752"/>
        <end position="3135"/>
    </location>
</feature>
<feature type="region of interest" description="HD3">
    <location>
        <begin position="3558"/>
        <end position="3775"/>
    </location>
</feature>
<feature type="region of interest" description="RdRp Fingers N-ter" evidence="15">
    <location>
        <begin position="4732"/>
        <end position="4946"/>
    </location>
</feature>
<feature type="region of interest" description="RdRp Palm N-ter" evidence="15">
    <location>
        <begin position="4947"/>
        <end position="4985"/>
    </location>
</feature>
<feature type="region of interest" description="RdRp Fingers C-ter" evidence="15">
    <location>
        <begin position="4986"/>
        <end position="5044"/>
    </location>
</feature>
<feature type="region of interest" description="RdRp Palm C-ter" evidence="15">
    <location>
        <begin position="5045"/>
        <end position="5180"/>
    </location>
</feature>
<feature type="region of interest" description="RdRp Thumb" evidence="15">
    <location>
        <begin position="5181"/>
        <end position="5297"/>
    </location>
</feature>
<feature type="region of interest" description="GpppA-binding" evidence="21">
    <location>
        <begin position="6308"/>
        <end position="6322"/>
    </location>
</feature>
<feature type="active site" description="For PL1-PRO activity" evidence="6">
    <location>
        <position position="1074"/>
    </location>
</feature>
<feature type="active site" description="For PL1-PRO activity" evidence="6">
    <location>
        <position position="1225"/>
    </location>
</feature>
<feature type="active site" description="For PL1-PRO activity" evidence="6">
    <location>
        <position position="1236"/>
    </location>
</feature>
<feature type="active site" description="For PL2-PRO activity" evidence="6">
    <location>
        <position position="1671"/>
    </location>
</feature>
<feature type="active site" description="For PL2-PRO activity" evidence="6">
    <location>
        <position position="1828"/>
    </location>
</feature>
<feature type="active site" description="For PL2-PRO activity" evidence="6">
    <location>
        <position position="1842"/>
    </location>
</feature>
<feature type="active site" description="For 3CL-PRO activity" evidence="9">
    <location>
        <position position="3287"/>
    </location>
</feature>
<feature type="active site" description="For 3CL-PRO activity" evidence="9">
    <location>
        <position position="3391"/>
    </location>
</feature>
<feature type="active site" evidence="15">
    <location>
        <position position="5124"/>
    </location>
</feature>
<feature type="active site" evidence="15">
    <location>
        <position position="5125"/>
    </location>
</feature>
<feature type="active site" evidence="15">
    <location>
        <position position="5126"/>
    </location>
</feature>
<feature type="active site" evidence="20">
    <location>
        <position position="5989"/>
    </location>
</feature>
<feature type="active site" evidence="20">
    <location>
        <position position="5991"/>
    </location>
</feature>
<feature type="active site" evidence="20">
    <location>
        <position position="6090"/>
    </location>
</feature>
<feature type="active site" evidence="20">
    <location>
        <position position="6167"/>
    </location>
</feature>
<feature type="active site" evidence="20">
    <location>
        <position position="6172"/>
    </location>
</feature>
<feature type="active site" evidence="23">
    <location>
        <position position="6683"/>
    </location>
</feature>
<feature type="active site" evidence="23">
    <location>
        <position position="6698"/>
    </location>
</feature>
<feature type="active site" evidence="23">
    <location>
        <position position="6738"/>
    </location>
</feature>
<feature type="active site" evidence="22">
    <location>
        <position position="6841"/>
    </location>
</feature>
<feature type="active site" evidence="22">
    <location>
        <position position="6925"/>
    </location>
</feature>
<feature type="active site" evidence="22">
    <location>
        <position position="6965"/>
    </location>
</feature>
<feature type="active site" evidence="22">
    <location>
        <position position="6998"/>
    </location>
</feature>
<feature type="binding site" evidence="28">
    <location>
        <position position="392"/>
    </location>
    <ligand>
        <name>Zn(2+)</name>
        <dbReference type="ChEBI" id="CHEBI:29105"/>
        <label>1</label>
    </ligand>
</feature>
<feature type="binding site" evidence="28">
    <location>
        <position position="397"/>
    </location>
    <ligand>
        <name>Zn(2+)</name>
        <dbReference type="ChEBI" id="CHEBI:29105"/>
        <label>1</label>
    </ligand>
</feature>
<feature type="binding site" evidence="28">
    <location>
        <position position="413"/>
    </location>
    <ligand>
        <name>Zn(2+)</name>
        <dbReference type="ChEBI" id="CHEBI:29105"/>
        <label>1</label>
    </ligand>
</feature>
<feature type="binding site" evidence="28">
    <location>
        <position position="416"/>
    </location>
    <ligand>
        <name>Zn(2+)</name>
        <dbReference type="ChEBI" id="CHEBI:29105"/>
        <label>1</label>
    </ligand>
</feature>
<feature type="binding site" evidence="6">
    <location>
        <position position="1151"/>
    </location>
    <ligand>
        <name>Zn(2+)</name>
        <dbReference type="ChEBI" id="CHEBI:29105"/>
        <label>2</label>
    </ligand>
</feature>
<feature type="binding site" evidence="6">
    <location>
        <position position="1154"/>
    </location>
    <ligand>
        <name>Zn(2+)</name>
        <dbReference type="ChEBI" id="CHEBI:29105"/>
        <label>2</label>
    </ligand>
</feature>
<feature type="binding site" evidence="6">
    <location>
        <position position="1177"/>
    </location>
    <ligand>
        <name>Zn(2+)</name>
        <dbReference type="ChEBI" id="CHEBI:29105"/>
        <label>2</label>
    </ligand>
</feature>
<feature type="binding site" evidence="6">
    <location>
        <position position="1179"/>
    </location>
    <ligand>
        <name>Zn(2+)</name>
        <dbReference type="ChEBI" id="CHEBI:29105"/>
        <label>2</label>
    </ligand>
</feature>
<feature type="binding site" evidence="6">
    <location>
        <position position="1749"/>
    </location>
    <ligand>
        <name>Zn(2+)</name>
        <dbReference type="ChEBI" id="CHEBI:29105"/>
        <label>3</label>
    </ligand>
</feature>
<feature type="binding site" evidence="6">
    <location>
        <position position="1751"/>
    </location>
    <ligand>
        <name>Zn(2+)</name>
        <dbReference type="ChEBI" id="CHEBI:29105"/>
        <label>3</label>
    </ligand>
</feature>
<feature type="binding site" evidence="6">
    <location>
        <position position="1783"/>
    </location>
    <ligand>
        <name>Zn(2+)</name>
        <dbReference type="ChEBI" id="CHEBI:29105"/>
        <label>3</label>
    </ligand>
</feature>
<feature type="binding site" evidence="6">
    <location>
        <position position="1785"/>
    </location>
    <ligand>
        <name>Zn(2+)</name>
        <dbReference type="ChEBI" id="CHEBI:29105"/>
        <label>3</label>
    </ligand>
</feature>
<feature type="binding site" evidence="31">
    <location>
        <position position="2387"/>
    </location>
    <ligand>
        <name>Zn(2+)</name>
        <dbReference type="ChEBI" id="CHEBI:29105"/>
        <label>4</label>
    </ligand>
</feature>
<feature type="binding site" evidence="31">
    <location>
        <position position="2392"/>
    </location>
    <ligand>
        <name>Zn(2+)</name>
        <dbReference type="ChEBI" id="CHEBI:29105"/>
        <label>4</label>
    </ligand>
</feature>
<feature type="binding site" evidence="31">
    <location>
        <position position="2397"/>
    </location>
    <ligand>
        <name>Zn(2+)</name>
        <dbReference type="ChEBI" id="CHEBI:29105"/>
        <label>4</label>
    </ligand>
</feature>
<feature type="binding site" evidence="31">
    <location>
        <position position="2400"/>
    </location>
    <ligand>
        <name>Zn(2+)</name>
        <dbReference type="ChEBI" id="CHEBI:29105"/>
        <label>4</label>
    </ligand>
</feature>
<feature type="binding site" evidence="31">
    <location>
        <position position="2433"/>
    </location>
    <ligand>
        <name>Zn(2+)</name>
        <dbReference type="ChEBI" id="CHEBI:29105"/>
        <label>5</label>
    </ligand>
</feature>
<feature type="binding site" evidence="31">
    <location>
        <position position="2436"/>
    </location>
    <ligand>
        <name>Zn(2+)</name>
        <dbReference type="ChEBI" id="CHEBI:29105"/>
        <label>5</label>
    </ligand>
</feature>
<feature type="binding site" evidence="31">
    <location>
        <position position="2440"/>
    </location>
    <ligand>
        <name>Zn(2+)</name>
        <dbReference type="ChEBI" id="CHEBI:29105"/>
        <label>5</label>
    </ligand>
</feature>
<feature type="binding site" evidence="31">
    <location>
        <position position="2443"/>
    </location>
    <ligand>
        <name>Zn(2+)</name>
        <dbReference type="ChEBI" id="CHEBI:29105"/>
        <label>5</label>
    </ligand>
</feature>
<feature type="binding site" evidence="19">
    <location>
        <position position="4306"/>
    </location>
    <ligand>
        <name>Zn(2+)</name>
        <dbReference type="ChEBI" id="CHEBI:29105"/>
        <label>6</label>
    </ligand>
</feature>
<feature type="binding site" evidence="19">
    <location>
        <position position="4309"/>
    </location>
    <ligand>
        <name>Zn(2+)</name>
        <dbReference type="ChEBI" id="CHEBI:29105"/>
        <label>6</label>
    </ligand>
</feature>
<feature type="binding site" evidence="19">
    <location>
        <position position="4315"/>
    </location>
    <ligand>
        <name>Zn(2+)</name>
        <dbReference type="ChEBI" id="CHEBI:29105"/>
        <label>6</label>
    </ligand>
</feature>
<feature type="binding site" evidence="19">
    <location>
        <position position="4322"/>
    </location>
    <ligand>
        <name>Zn(2+)</name>
        <dbReference type="ChEBI" id="CHEBI:29105"/>
        <label>6</label>
    </ligand>
</feature>
<feature type="binding site" evidence="19">
    <location>
        <position position="4348"/>
    </location>
    <ligand>
        <name>Zn(2+)</name>
        <dbReference type="ChEBI" id="CHEBI:29105"/>
        <label>7</label>
    </ligand>
</feature>
<feature type="binding site" evidence="19">
    <location>
        <position position="4351"/>
    </location>
    <ligand>
        <name>Zn(2+)</name>
        <dbReference type="ChEBI" id="CHEBI:29105"/>
        <label>7</label>
    </ligand>
</feature>
<feature type="binding site" evidence="19">
    <location>
        <position position="4359"/>
    </location>
    <ligand>
        <name>Zn(2+)</name>
        <dbReference type="ChEBI" id="CHEBI:29105"/>
        <label>7</label>
    </ligand>
</feature>
<feature type="binding site" evidence="19">
    <location>
        <position position="4361"/>
    </location>
    <ligand>
        <name>Zn(2+)</name>
        <dbReference type="ChEBI" id="CHEBI:29105"/>
        <label>7</label>
    </ligand>
</feature>
<feature type="binding site" evidence="3">
    <location>
        <position position="4578"/>
    </location>
    <ligand>
        <name>Mn(2+)</name>
        <dbReference type="ChEBI" id="CHEBI:29035"/>
    </ligand>
</feature>
<feature type="binding site" evidence="3">
    <location>
        <position position="4587"/>
    </location>
    <ligand>
        <name>Mn(2+)</name>
        <dbReference type="ChEBI" id="CHEBI:29035"/>
    </ligand>
</feature>
<feature type="binding site" evidence="34">
    <location>
        <position position="4660"/>
    </location>
    <ligand>
        <name>Zn(2+)</name>
        <dbReference type="ChEBI" id="CHEBI:29105"/>
        <label>8</label>
    </ligand>
</feature>
<feature type="binding site" evidence="34">
    <location>
        <position position="4666"/>
    </location>
    <ligand>
        <name>Zn(2+)</name>
        <dbReference type="ChEBI" id="CHEBI:29105"/>
        <label>8</label>
    </ligand>
</feature>
<feature type="binding site" evidence="34">
    <location>
        <position position="4671"/>
    </location>
    <ligand>
        <name>Zn(2+)</name>
        <dbReference type="ChEBI" id="CHEBI:29105"/>
        <label>8</label>
    </ligand>
</feature>
<feature type="binding site" evidence="34">
    <location>
        <position position="4675"/>
    </location>
    <ligand>
        <name>Zn(2+)</name>
        <dbReference type="ChEBI" id="CHEBI:29105"/>
        <label>8</label>
    </ligand>
</feature>
<feature type="binding site" evidence="15">
    <location>
        <position position="4852"/>
    </location>
    <ligand>
        <name>Zn(2+)</name>
        <dbReference type="ChEBI" id="CHEBI:29105"/>
        <label>9</label>
    </ligand>
</feature>
<feature type="binding site" evidence="15">
    <location>
        <position position="5007"/>
    </location>
    <ligand>
        <name>Zn(2+)</name>
        <dbReference type="ChEBI" id="CHEBI:29105"/>
        <label>9</label>
    </ligand>
</feature>
<feature type="binding site" evidence="15">
    <location>
        <position position="5010"/>
    </location>
    <ligand>
        <name>Zn(2+)</name>
        <dbReference type="ChEBI" id="CHEBI:29105"/>
        <label>9</label>
    </ligand>
</feature>
<feature type="binding site" evidence="15">
    <location>
        <position position="5011"/>
    </location>
    <ligand>
        <name>Zn(2+)</name>
        <dbReference type="ChEBI" id="CHEBI:29105"/>
        <label>9</label>
    </ligand>
</feature>
<feature type="binding site" evidence="10">
    <location>
        <position position="5302"/>
    </location>
    <ligand>
        <name>Zn(2+)</name>
        <dbReference type="ChEBI" id="CHEBI:29105"/>
        <label>10</label>
    </ligand>
</feature>
<feature type="binding site" evidence="10">
    <location>
        <position position="5305"/>
    </location>
    <ligand>
        <name>Zn(2+)</name>
        <dbReference type="ChEBI" id="CHEBI:29105"/>
        <label>10</label>
    </ligand>
</feature>
<feature type="binding site" evidence="10">
    <location>
        <position position="5313"/>
    </location>
    <ligand>
        <name>Zn(2+)</name>
        <dbReference type="ChEBI" id="CHEBI:29105"/>
        <label>11</label>
    </ligand>
</feature>
<feature type="binding site" evidence="10">
    <location>
        <position position="5316"/>
    </location>
    <ligand>
        <name>Zn(2+)</name>
        <dbReference type="ChEBI" id="CHEBI:29105"/>
        <label>11</label>
    </ligand>
</feature>
<feature type="binding site" evidence="10">
    <location>
        <position position="5323"/>
    </location>
    <ligand>
        <name>Zn(2+)</name>
        <dbReference type="ChEBI" id="CHEBI:29105"/>
        <label>10</label>
    </ligand>
</feature>
<feature type="binding site" evidence="10">
    <location>
        <position position="5326"/>
    </location>
    <ligand>
        <name>Zn(2+)</name>
        <dbReference type="ChEBI" id="CHEBI:29105"/>
        <label>10</label>
    </ligand>
</feature>
<feature type="binding site" evidence="10">
    <location>
        <position position="5330"/>
    </location>
    <ligand>
        <name>Zn(2+)</name>
        <dbReference type="ChEBI" id="CHEBI:29105"/>
        <label>11</label>
    </ligand>
</feature>
<feature type="binding site" evidence="10">
    <location>
        <position position="5336"/>
    </location>
    <ligand>
        <name>Zn(2+)</name>
        <dbReference type="ChEBI" id="CHEBI:29105"/>
        <label>11</label>
    </ligand>
</feature>
<feature type="binding site" evidence="10">
    <location>
        <position position="5347"/>
    </location>
    <ligand>
        <name>Zn(2+)</name>
        <dbReference type="ChEBI" id="CHEBI:29105"/>
        <label>12</label>
    </ligand>
</feature>
<feature type="binding site" evidence="10">
    <location>
        <position position="5352"/>
    </location>
    <ligand>
        <name>Zn(2+)</name>
        <dbReference type="ChEBI" id="CHEBI:29105"/>
        <label>12</label>
    </ligand>
</feature>
<feature type="binding site" evidence="10">
    <location>
        <position position="5369"/>
    </location>
    <ligand>
        <name>Zn(2+)</name>
        <dbReference type="ChEBI" id="CHEBI:29105"/>
        <label>12</label>
    </ligand>
</feature>
<feature type="binding site" evidence="10">
    <location>
        <position position="5372"/>
    </location>
    <ligand>
        <name>Zn(2+)</name>
        <dbReference type="ChEBI" id="CHEBI:29105"/>
        <label>12</label>
    </ligand>
</feature>
<feature type="binding site" evidence="1">
    <location>
        <begin position="5578"/>
        <end position="5585"/>
    </location>
    <ligand>
        <name>ATP</name>
        <dbReference type="ChEBI" id="CHEBI:30616"/>
    </ligand>
</feature>
<feature type="binding site" evidence="20">
    <location>
        <position position="6106"/>
    </location>
    <ligand>
        <name>Zn(2+)</name>
        <dbReference type="ChEBI" id="CHEBI:29105"/>
        <label>13</label>
    </ligand>
</feature>
<feature type="binding site" evidence="20">
    <location>
        <position position="6109"/>
    </location>
    <ligand>
        <name>Zn(2+)</name>
        <dbReference type="ChEBI" id="CHEBI:29105"/>
        <label>13</label>
    </ligand>
</feature>
<feature type="binding site" evidence="20">
    <location>
        <position position="6125"/>
    </location>
    <ligand>
        <name>Zn(2+)</name>
        <dbReference type="ChEBI" id="CHEBI:29105"/>
        <label>13</label>
    </ligand>
</feature>
<feature type="binding site" evidence="20">
    <location>
        <position position="6128"/>
    </location>
    <ligand>
        <name>Zn(2+)</name>
        <dbReference type="ChEBI" id="CHEBI:29105"/>
        <label>13</label>
    </ligand>
</feature>
<feature type="binding site" evidence="20">
    <location>
        <position position="6156"/>
    </location>
    <ligand>
        <name>Zn(2+)</name>
        <dbReference type="ChEBI" id="CHEBI:29105"/>
        <label>14</label>
    </ligand>
</feature>
<feature type="binding site" evidence="20">
    <location>
        <position position="6160"/>
    </location>
    <ligand>
        <name>Zn(2+)</name>
        <dbReference type="ChEBI" id="CHEBI:29105"/>
        <label>14</label>
    </ligand>
</feature>
<feature type="binding site" evidence="20">
    <location>
        <position position="6163"/>
    </location>
    <ligand>
        <name>Zn(2+)</name>
        <dbReference type="ChEBI" id="CHEBI:29105"/>
        <label>14</label>
    </ligand>
</feature>
<feature type="binding site" evidence="20">
    <location>
        <position position="6178"/>
    </location>
    <ligand>
        <name>Zn(2+)</name>
        <dbReference type="ChEBI" id="CHEBI:29105"/>
        <label>14</label>
    </ligand>
</feature>
<feature type="binding site" evidence="21">
    <location>
        <begin position="6230"/>
        <end position="6236"/>
    </location>
    <ligand>
        <name>S-adenosyl-L-methionine</name>
        <dbReference type="ChEBI" id="CHEBI:59789"/>
    </ligand>
</feature>
<feature type="binding site" evidence="21">
    <location>
        <position position="6346"/>
    </location>
    <ligand>
        <name>Zn(2+)</name>
        <dbReference type="ChEBI" id="CHEBI:29105"/>
        <label>15</label>
    </ligand>
</feature>
<feature type="binding site" evidence="21">
    <location>
        <position position="6367"/>
    </location>
    <ligand>
        <name>Zn(2+)</name>
        <dbReference type="ChEBI" id="CHEBI:29105"/>
        <label>15</label>
    </ligand>
</feature>
<feature type="binding site" evidence="21">
    <location>
        <position position="6378"/>
    </location>
    <ligand>
        <name>Zn(2+)</name>
        <dbReference type="ChEBI" id="CHEBI:29105"/>
        <label>15</label>
    </ligand>
</feature>
<feature type="binding site" evidence="21">
    <location>
        <position position="6381"/>
    </location>
    <ligand>
        <name>Zn(2+)</name>
        <dbReference type="ChEBI" id="CHEBI:29105"/>
        <label>15</label>
    </ligand>
</feature>
<feature type="site" description="Cleavage; by PL1-PRO" evidence="1">
    <location>
        <begin position="246"/>
        <end position="247"/>
    </location>
</feature>
<feature type="site" description="Cleavage; by PL1-PRO" evidence="1">
    <location>
        <begin position="851"/>
        <end position="852"/>
    </location>
</feature>
<feature type="site" description="Cleavage; by PL2-PRO" evidence="1">
    <location>
        <begin position="2750"/>
        <end position="2751"/>
    </location>
</feature>
<feature type="site" description="Cleavage; by 3CL-PRO" evidence="1">
    <location>
        <begin position="3246"/>
        <end position="3247"/>
    </location>
</feature>
<feature type="site" description="Cleavage; by 3CL-PRO" evidence="1">
    <location>
        <begin position="3549"/>
        <end position="3550"/>
    </location>
</feature>
<feature type="site" description="Cleavage; by 3CL-PRO" evidence="1">
    <location>
        <begin position="3836"/>
        <end position="3837"/>
    </location>
</feature>
<feature type="site" description="Cleavage; by 3CL-PRO" evidence="1">
    <location>
        <begin position="3925"/>
        <end position="3926"/>
    </location>
</feature>
<feature type="site" description="Cleavage; by 3CL-PRO" evidence="1">
    <location>
        <begin position="4122"/>
        <end position="4123"/>
    </location>
</feature>
<feature type="site" description="Cleavage; by 3CL-PRO" evidence="1">
    <location>
        <begin position="4232"/>
        <end position="4233"/>
    </location>
</feature>
<feature type="site" description="Cleavage; by 3CL-PRO" evidence="1">
    <location>
        <begin position="4369"/>
        <end position="4370"/>
    </location>
</feature>
<feature type="site" description="Cleavage; by 3CL-PRO" evidence="1">
    <location>
        <begin position="5297"/>
        <end position="5298"/>
    </location>
</feature>
<feature type="site" description="Cleavage; by 3CL-PRO" evidence="1">
    <location>
        <begin position="5900"/>
        <end position="5901"/>
    </location>
</feature>
<feature type="site" description="Cleavage; by 3CL-PRO" evidence="1">
    <location>
        <begin position="6421"/>
        <end position="6422"/>
    </location>
</feature>
<feature type="site" description="Cleavage; by 3CL-PRO" evidence="1">
    <location>
        <begin position="6795"/>
        <end position="6796"/>
    </location>
</feature>
<feature type="disulfide bond" evidence="32">
    <location>
        <begin position="2251"/>
        <end position="2275"/>
    </location>
</feature>
<feature type="disulfide bond" evidence="32">
    <location>
        <begin position="2266"/>
        <end position="2272"/>
    </location>
</feature>
<keyword id="KW-1072">Activation of host autophagy by virus</keyword>
<keyword id="KW-0067">ATP-binding</keyword>
<keyword id="KW-1132">Decay of host mRNAs by virus</keyword>
<keyword id="KW-1015">Disulfide bond</keyword>
<keyword id="KW-0255">Endonuclease</keyword>
<keyword id="KW-1262">Eukaryotic host gene expression shutoff by virus</keyword>
<keyword id="KW-1193">Eukaryotic host translation shutoff by virus</keyword>
<keyword id="KW-0269">Exonuclease</keyword>
<keyword id="KW-0347">Helicase</keyword>
<keyword id="KW-1035">Host cytoplasm</keyword>
<keyword id="KW-1190">Host gene expression shutoff by virus</keyword>
<keyword id="KW-1043">Host membrane</keyword>
<keyword id="KW-1192">Host mRNA suppression by virus</keyword>
<keyword id="KW-0945">Host-virus interaction</keyword>
<keyword id="KW-0378">Hydrolase</keyword>
<keyword id="KW-1090">Inhibition of host innate immune response by virus</keyword>
<keyword id="KW-1114">Inhibition of host interferon signaling pathway by virus</keyword>
<keyword id="KW-1095">Inhibition of host ISG15 by virus</keyword>
<keyword id="KW-1100">Inhibition of host NF-kappa-B by virus</keyword>
<keyword id="KW-0922">Interferon antiviral system evasion</keyword>
<keyword id="KW-0456">Lyase</keyword>
<keyword id="KW-0464">Manganese</keyword>
<keyword id="KW-0472">Membrane</keyword>
<keyword id="KW-0479">Metal-binding</keyword>
<keyword id="KW-0489">Methyltransferase</keyword>
<keyword id="KW-1127">Modulation of host ubiquitin pathway by viral deubiquitinase</keyword>
<keyword id="KW-1130">Modulation of host ubiquitin pathway by virus</keyword>
<keyword id="KW-0540">Nuclease</keyword>
<keyword id="KW-0547">Nucleotide-binding</keyword>
<keyword id="KW-0548">Nucleotidyltransferase</keyword>
<keyword id="KW-0645">Protease</keyword>
<keyword id="KW-0677">Repeat</keyword>
<keyword id="KW-0688">Ribosomal frameshifting</keyword>
<keyword id="KW-0694">RNA-binding</keyword>
<keyword id="KW-0696">RNA-directed RNA polymerase</keyword>
<keyword id="KW-0788">Thiol protease</keyword>
<keyword id="KW-0808">Transferase</keyword>
<keyword id="KW-0812">Transmembrane</keyword>
<keyword id="KW-1133">Transmembrane helix</keyword>
<keyword id="KW-0833">Ubl conjugation pathway</keyword>
<keyword id="KW-0899">Viral immunoevasion</keyword>
<keyword id="KW-0693">Viral RNA replication</keyword>
<keyword id="KW-0862">Zinc</keyword>
<keyword id="KW-0863">Zinc-finger</keyword>
<dbReference type="EC" id="3.4.19.12"/>
<dbReference type="EC" id="3.4.22.-"/>
<dbReference type="EC" id="2.7.7.48"/>
<dbReference type="EC" id="2.7.7.50"/>
<dbReference type="EC" id="3.6.4.12"/>
<dbReference type="EC" id="3.6.4.13"/>
<dbReference type="EC" id="2.1.1.56"/>
<dbReference type="EC" id="3.1.13.-"/>
<dbReference type="EC" id="4.6.1.-"/>
<dbReference type="EC" id="2.1.1.57"/>
<dbReference type="EMBL" id="AF391542">
    <property type="protein sequence ID" value="AAL57305.1"/>
    <property type="status" value="ALT_SEQ"/>
    <property type="molecule type" value="Genomic_RNA"/>
</dbReference>
<dbReference type="SMR" id="P0C6W8"/>
<dbReference type="Proteomes" id="UP000008571">
    <property type="component" value="Genome"/>
</dbReference>
<dbReference type="GO" id="GO:0044172">
    <property type="term" value="C:host cell endoplasmic reticulum-Golgi intermediate compartment"/>
    <property type="evidence" value="ECO:0007669"/>
    <property type="project" value="UniProtKB-SubCell"/>
</dbReference>
<dbReference type="GO" id="GO:0033644">
    <property type="term" value="C:host cell membrane"/>
    <property type="evidence" value="ECO:0007669"/>
    <property type="project" value="UniProtKB-SubCell"/>
</dbReference>
<dbReference type="GO" id="GO:0044220">
    <property type="term" value="C:host cell perinuclear region of cytoplasm"/>
    <property type="evidence" value="ECO:0007669"/>
    <property type="project" value="UniProtKB-SubCell"/>
</dbReference>
<dbReference type="GO" id="GO:0016020">
    <property type="term" value="C:membrane"/>
    <property type="evidence" value="ECO:0007669"/>
    <property type="project" value="UniProtKB-KW"/>
</dbReference>
<dbReference type="GO" id="GO:0000175">
    <property type="term" value="F:3'-5'-RNA exonuclease activity"/>
    <property type="evidence" value="ECO:0007669"/>
    <property type="project" value="InterPro"/>
</dbReference>
<dbReference type="GO" id="GO:0043139">
    <property type="term" value="F:5'-3' DNA helicase activity"/>
    <property type="evidence" value="ECO:0007669"/>
    <property type="project" value="TreeGrafter"/>
</dbReference>
<dbReference type="GO" id="GO:0005524">
    <property type="term" value="F:ATP binding"/>
    <property type="evidence" value="ECO:0007669"/>
    <property type="project" value="UniProtKB-KW"/>
</dbReference>
<dbReference type="GO" id="GO:0016887">
    <property type="term" value="F:ATP hydrolysis activity"/>
    <property type="evidence" value="ECO:0007669"/>
    <property type="project" value="RHEA"/>
</dbReference>
<dbReference type="GO" id="GO:0004843">
    <property type="term" value="F:cysteine-type deubiquitinase activity"/>
    <property type="evidence" value="ECO:0007669"/>
    <property type="project" value="UniProtKB-EC"/>
</dbReference>
<dbReference type="GO" id="GO:0004197">
    <property type="term" value="F:cysteine-type endopeptidase activity"/>
    <property type="evidence" value="ECO:0007669"/>
    <property type="project" value="InterPro"/>
</dbReference>
<dbReference type="GO" id="GO:0004519">
    <property type="term" value="F:endonuclease activity"/>
    <property type="evidence" value="ECO:0007669"/>
    <property type="project" value="UniProtKB-KW"/>
</dbReference>
<dbReference type="GO" id="GO:0016829">
    <property type="term" value="F:lyase activity"/>
    <property type="evidence" value="ECO:0007669"/>
    <property type="project" value="UniProtKB-KW"/>
</dbReference>
<dbReference type="GO" id="GO:0004483">
    <property type="term" value="F:mRNA (nucleoside-2'-O-)-methyltransferase activity"/>
    <property type="evidence" value="ECO:0007669"/>
    <property type="project" value="InterPro"/>
</dbReference>
<dbReference type="GO" id="GO:0004482">
    <property type="term" value="F:mRNA 5'-cap (guanine-N7-)-methyltransferase activity"/>
    <property type="evidence" value="ECO:0007669"/>
    <property type="project" value="InterPro"/>
</dbReference>
<dbReference type="GO" id="GO:0008242">
    <property type="term" value="F:omega peptidase activity"/>
    <property type="evidence" value="ECO:0007669"/>
    <property type="project" value="InterPro"/>
</dbReference>
<dbReference type="GO" id="GO:0003724">
    <property type="term" value="F:RNA helicase activity"/>
    <property type="evidence" value="ECO:0007669"/>
    <property type="project" value="UniProtKB-EC"/>
</dbReference>
<dbReference type="GO" id="GO:0003968">
    <property type="term" value="F:RNA-directed RNA polymerase activity"/>
    <property type="evidence" value="ECO:0007669"/>
    <property type="project" value="UniProtKB-KW"/>
</dbReference>
<dbReference type="GO" id="GO:0003727">
    <property type="term" value="F:single-stranded RNA binding"/>
    <property type="evidence" value="ECO:0007669"/>
    <property type="project" value="InterPro"/>
</dbReference>
<dbReference type="GO" id="GO:0008270">
    <property type="term" value="F:zinc ion binding"/>
    <property type="evidence" value="ECO:0007669"/>
    <property type="project" value="UniProtKB-KW"/>
</dbReference>
<dbReference type="GO" id="GO:0006351">
    <property type="term" value="P:DNA-templated transcription"/>
    <property type="evidence" value="ECO:0007669"/>
    <property type="project" value="InterPro"/>
</dbReference>
<dbReference type="GO" id="GO:0006508">
    <property type="term" value="P:proteolysis"/>
    <property type="evidence" value="ECO:0007669"/>
    <property type="project" value="UniProtKB-KW"/>
</dbReference>
<dbReference type="GO" id="GO:0010506">
    <property type="term" value="P:regulation of autophagy"/>
    <property type="evidence" value="ECO:0007669"/>
    <property type="project" value="InterPro"/>
</dbReference>
<dbReference type="GO" id="GO:0039520">
    <property type="term" value="P:symbiont-mediated activation of host autophagy"/>
    <property type="evidence" value="ECO:0007669"/>
    <property type="project" value="UniProtKB-KW"/>
</dbReference>
<dbReference type="GO" id="GO:0039595">
    <property type="term" value="P:symbiont-mediated degradation of host mRNA"/>
    <property type="evidence" value="ECO:0007669"/>
    <property type="project" value="UniProtKB-KW"/>
</dbReference>
<dbReference type="GO" id="GO:0039648">
    <property type="term" value="P:symbiont-mediated perturbation of host ubiquitin-like protein modification"/>
    <property type="evidence" value="ECO:0007669"/>
    <property type="project" value="UniProtKB-KW"/>
</dbReference>
<dbReference type="GO" id="GO:0039657">
    <property type="term" value="P:symbiont-mediated suppression of host gene expression"/>
    <property type="evidence" value="ECO:0007669"/>
    <property type="project" value="UniProtKB-KW"/>
</dbReference>
<dbReference type="GO" id="GO:0039579">
    <property type="term" value="P:symbiont-mediated suppression of host ISG15-protein conjugation"/>
    <property type="evidence" value="ECO:0007669"/>
    <property type="project" value="UniProtKB-KW"/>
</dbReference>
<dbReference type="GO" id="GO:0085034">
    <property type="term" value="P:symbiont-mediated suppression of host NF-kappaB cascade"/>
    <property type="evidence" value="ECO:0007669"/>
    <property type="project" value="UniProtKB-KW"/>
</dbReference>
<dbReference type="GO" id="GO:0039502">
    <property type="term" value="P:symbiont-mediated suppression of host type I interferon-mediated signaling pathway"/>
    <property type="evidence" value="ECO:0007669"/>
    <property type="project" value="UniProtKB-KW"/>
</dbReference>
<dbReference type="GO" id="GO:0019082">
    <property type="term" value="P:viral protein processing"/>
    <property type="evidence" value="ECO:0007669"/>
    <property type="project" value="InterPro"/>
</dbReference>
<dbReference type="GO" id="GO:0039694">
    <property type="term" value="P:viral RNA genome replication"/>
    <property type="evidence" value="ECO:0007669"/>
    <property type="project" value="InterPro"/>
</dbReference>
<dbReference type="GO" id="GO:0075523">
    <property type="term" value="P:viral translational frameshifting"/>
    <property type="evidence" value="ECO:0007669"/>
    <property type="project" value="UniProtKB-KW"/>
</dbReference>
<dbReference type="CDD" id="cd21409">
    <property type="entry name" value="1B_cv_Nsp13-like"/>
    <property type="match status" value="1"/>
</dbReference>
<dbReference type="CDD" id="cd21901">
    <property type="entry name" value="alpha_betaCoV_Nsp10"/>
    <property type="match status" value="1"/>
</dbReference>
<dbReference type="CDD" id="cd21560">
    <property type="entry name" value="betaCoV-Nsp6"/>
    <property type="match status" value="1"/>
</dbReference>
<dbReference type="CDD" id="cd21722">
    <property type="entry name" value="betaCoV_Nsp13-helicase"/>
    <property type="match status" value="1"/>
</dbReference>
<dbReference type="CDD" id="cd21659">
    <property type="entry name" value="betaCoV_Nsp14"/>
    <property type="match status" value="1"/>
</dbReference>
<dbReference type="CDD" id="cd21519">
    <property type="entry name" value="betaCoV_Nsp2_MHV-like"/>
    <property type="match status" value="1"/>
</dbReference>
<dbReference type="CDD" id="cd21666">
    <property type="entry name" value="betaCoV_Nsp5_Mpro"/>
    <property type="match status" value="1"/>
</dbReference>
<dbReference type="CDD" id="cd21827">
    <property type="entry name" value="betaCoV_Nsp7"/>
    <property type="match status" value="1"/>
</dbReference>
<dbReference type="CDD" id="cd21831">
    <property type="entry name" value="betaCoV_Nsp8"/>
    <property type="match status" value="1"/>
</dbReference>
<dbReference type="CDD" id="cd21898">
    <property type="entry name" value="betaCoV_Nsp9"/>
    <property type="match status" value="1"/>
</dbReference>
<dbReference type="CDD" id="cd21732">
    <property type="entry name" value="betaCoV_PLPro"/>
    <property type="match status" value="1"/>
</dbReference>
<dbReference type="CDD" id="cd23528">
    <property type="entry name" value="capping_2-OMTase_betaCoV_Nsp16"/>
    <property type="match status" value="1"/>
</dbReference>
<dbReference type="CDD" id="cd21473">
    <property type="entry name" value="cv_Nsp4_TM"/>
    <property type="match status" value="1"/>
</dbReference>
<dbReference type="CDD" id="cd21524">
    <property type="entry name" value="DPUP_MHV_Nsp3"/>
    <property type="match status" value="1"/>
</dbReference>
<dbReference type="CDD" id="cd21593">
    <property type="entry name" value="HCoV_HKU1-like_RdRp"/>
    <property type="match status" value="1"/>
</dbReference>
<dbReference type="CDD" id="cd21167">
    <property type="entry name" value="M_alpha_beta_cv_Nsp15-like"/>
    <property type="match status" value="1"/>
</dbReference>
<dbReference type="CDD" id="cd21557">
    <property type="entry name" value="Macro_X_Nsp3-like"/>
    <property type="match status" value="1"/>
</dbReference>
<dbReference type="CDD" id="cd21879">
    <property type="entry name" value="MHV-like_Nsp1"/>
    <property type="match status" value="1"/>
</dbReference>
<dbReference type="CDD" id="cd21812">
    <property type="entry name" value="MHV-like_Nsp3_betaSM"/>
    <property type="match status" value="1"/>
</dbReference>
<dbReference type="CDD" id="cd21824">
    <property type="entry name" value="MHV-like_Nsp3_NAB"/>
    <property type="match status" value="1"/>
</dbReference>
<dbReference type="CDD" id="cd21161">
    <property type="entry name" value="NendoU_cv_Nsp15-like"/>
    <property type="match status" value="1"/>
</dbReference>
<dbReference type="CDD" id="cd21171">
    <property type="entry name" value="NTD_alpha_betaCoV_Nsp15-like"/>
    <property type="match status" value="1"/>
</dbReference>
<dbReference type="CDD" id="cd21689">
    <property type="entry name" value="stalk_CoV_Nsp13-like"/>
    <property type="match status" value="1"/>
</dbReference>
<dbReference type="CDD" id="cd21714">
    <property type="entry name" value="TM_Y_MHV-like_Nsp3_C"/>
    <property type="match status" value="1"/>
</dbReference>
<dbReference type="CDD" id="cd21467">
    <property type="entry name" value="Ubl1_cv_Nsp3_N-like"/>
    <property type="match status" value="1"/>
</dbReference>
<dbReference type="CDD" id="cd21401">
    <property type="entry name" value="ZBD_cv_Nsp13-like"/>
    <property type="match status" value="1"/>
</dbReference>
<dbReference type="FunFam" id="3.40.50.150:FF:000162">
    <property type="entry name" value="Orf1ab polyprotein"/>
    <property type="match status" value="1"/>
</dbReference>
<dbReference type="FunFam" id="1.10.150.420:FF:000001">
    <property type="entry name" value="Replicase polyprotein"/>
    <property type="match status" value="1"/>
</dbReference>
<dbReference type="Gene3D" id="1.10.8.1190">
    <property type="match status" value="2"/>
</dbReference>
<dbReference type="Gene3D" id="2.60.120.1680">
    <property type="match status" value="1"/>
</dbReference>
<dbReference type="Gene3D" id="3.10.20.350">
    <property type="match status" value="1"/>
</dbReference>
<dbReference type="Gene3D" id="3.10.20.540">
    <property type="match status" value="1"/>
</dbReference>
<dbReference type="Gene3D" id="3.40.50.11580">
    <property type="match status" value="1"/>
</dbReference>
<dbReference type="Gene3D" id="6.10.140.2090">
    <property type="match status" value="1"/>
</dbReference>
<dbReference type="Gene3D" id="1.10.150.420">
    <property type="entry name" value="Coronavirus nonstructural protein 4 C-terminus"/>
    <property type="match status" value="1"/>
</dbReference>
<dbReference type="Gene3D" id="3.40.220.10">
    <property type="entry name" value="Leucine Aminopeptidase, subunit E, domain 1"/>
    <property type="match status" value="1"/>
</dbReference>
<dbReference type="Gene3D" id="1.10.1840.10">
    <property type="entry name" value="main proteinase (3clpro) structure, domain 3"/>
    <property type="match status" value="1"/>
</dbReference>
<dbReference type="Gene3D" id="3.30.160.820">
    <property type="entry name" value="Nsp15 N-terminal domain-like"/>
    <property type="match status" value="1"/>
</dbReference>
<dbReference type="Gene3D" id="1.10.8.370">
    <property type="entry name" value="nsp7 replicase"/>
    <property type="match status" value="1"/>
</dbReference>
<dbReference type="Gene3D" id="3.30.70.3540">
    <property type="entry name" value="Nsp8 replicase, head domain"/>
    <property type="match status" value="1"/>
</dbReference>
<dbReference type="Gene3D" id="3.40.50.300">
    <property type="entry name" value="P-loop containing nucleotide triphosphate hydrolases"/>
    <property type="match status" value="2"/>
</dbReference>
<dbReference type="Gene3D" id="2.40.10.250">
    <property type="entry name" value="Replicase NSP9"/>
    <property type="match status" value="1"/>
</dbReference>
<dbReference type="Gene3D" id="3.40.50.11020">
    <property type="entry name" value="Replicase polyprotein, nucleic acid-binding domain"/>
    <property type="match status" value="1"/>
</dbReference>
<dbReference type="Gene3D" id="2.40.10.10">
    <property type="entry name" value="Trypsin-like serine proteases"/>
    <property type="match status" value="2"/>
</dbReference>
<dbReference type="Gene3D" id="3.40.50.150">
    <property type="entry name" value="Vaccinia Virus protein VP39"/>
    <property type="match status" value="1"/>
</dbReference>
<dbReference type="InterPro" id="IPR027351">
    <property type="entry name" value="(+)RNA_virus_helicase_core_dom"/>
</dbReference>
<dbReference type="InterPro" id="IPR046443">
    <property type="entry name" value="a/bCoV_NSP1_glob"/>
</dbReference>
<dbReference type="InterPro" id="IPR046440">
    <property type="entry name" value="AV_NSP11N_COV_NSP15M"/>
</dbReference>
<dbReference type="InterPro" id="IPR022570">
    <property type="entry name" value="B-CoV_A_NSP1"/>
</dbReference>
<dbReference type="InterPro" id="IPR046442">
    <property type="entry name" value="bCoV_NSP1_C"/>
</dbReference>
<dbReference type="InterPro" id="IPR050534">
    <property type="entry name" value="Coronavir_polyprotein_1ab"/>
</dbReference>
<dbReference type="InterPro" id="IPR043608">
    <property type="entry name" value="CoV_NSP15_M"/>
</dbReference>
<dbReference type="InterPro" id="IPR043606">
    <property type="entry name" value="CoV_NSP15_N"/>
</dbReference>
<dbReference type="InterPro" id="IPR043613">
    <property type="entry name" value="CoV_NSP2_C"/>
</dbReference>
<dbReference type="InterPro" id="IPR047573">
    <property type="entry name" value="CoV_NSP2_M"/>
</dbReference>
<dbReference type="InterPro" id="IPR049894">
    <property type="entry name" value="COV_NSP3_3ECTO"/>
</dbReference>
<dbReference type="InterPro" id="IPR043611">
    <property type="entry name" value="CoV_NSP3_C"/>
</dbReference>
<dbReference type="InterPro" id="IPR047566">
    <property type="entry name" value="CoV_NSP3_Y"/>
</dbReference>
<dbReference type="InterPro" id="IPR032505">
    <property type="entry name" value="CoV_NSP4_C"/>
</dbReference>
<dbReference type="InterPro" id="IPR043612">
    <property type="entry name" value="CoV_NSP4_N"/>
</dbReference>
<dbReference type="InterPro" id="IPR043502">
    <property type="entry name" value="DNA/RNA_pol_sf"/>
</dbReference>
<dbReference type="InterPro" id="IPR041679">
    <property type="entry name" value="DNA2/NAM7-like_C"/>
</dbReference>
<dbReference type="InterPro" id="IPR022733">
    <property type="entry name" value="DPUP_SUD_C_bCoV"/>
</dbReference>
<dbReference type="InterPro" id="IPR037227">
    <property type="entry name" value="EndoU-like"/>
</dbReference>
<dbReference type="InterPro" id="IPR002589">
    <property type="entry name" value="Macro_dom"/>
</dbReference>
<dbReference type="InterPro" id="IPR043472">
    <property type="entry name" value="Macro_dom-like"/>
</dbReference>
<dbReference type="InterPro" id="IPR044371">
    <property type="entry name" value="Macro_X_NSP3-like"/>
</dbReference>
<dbReference type="InterPro" id="IPR046435">
    <property type="entry name" value="N7_MTase_CoV"/>
</dbReference>
<dbReference type="InterPro" id="IPR043609">
    <property type="entry name" value="NendoU_nidovirus"/>
</dbReference>
<dbReference type="InterPro" id="IPR044863">
    <property type="entry name" value="NIRAN"/>
</dbReference>
<dbReference type="InterPro" id="IPR046438">
    <property type="entry name" value="NIV_2_O_MTASE"/>
</dbReference>
<dbReference type="InterPro" id="IPR046436">
    <property type="entry name" value="NIV_EXON"/>
</dbReference>
<dbReference type="InterPro" id="IPR036333">
    <property type="entry name" value="NSP10_sf_CoV"/>
</dbReference>
<dbReference type="InterPro" id="IPR047570">
    <property type="entry name" value="NSP12_IF_CoV"/>
</dbReference>
<dbReference type="InterPro" id="IPR044343">
    <property type="entry name" value="NSP13_1B_dom_CoV"/>
</dbReference>
<dbReference type="InterPro" id="IPR048673">
    <property type="entry name" value="NSP13_stalk_CoV"/>
</dbReference>
<dbReference type="InterPro" id="IPR048672">
    <property type="entry name" value="NSP13_ZBD_CoV"/>
</dbReference>
<dbReference type="InterPro" id="IPR027352">
    <property type="entry name" value="NSP13_ZBD_CoV-like"/>
</dbReference>
<dbReference type="InterPro" id="IPR044315">
    <property type="entry name" value="NSP14_betaCoV"/>
</dbReference>
<dbReference type="InterPro" id="IPR009466">
    <property type="entry name" value="NSP14_CoV"/>
</dbReference>
<dbReference type="InterPro" id="IPR044330">
    <property type="entry name" value="NSP15_alpha_betaCoV_N"/>
</dbReference>
<dbReference type="InterPro" id="IPR044322">
    <property type="entry name" value="NSP15_M_alpha_beta_CoV"/>
</dbReference>
<dbReference type="InterPro" id="IPR043174">
    <property type="entry name" value="NSP15_middle_sf"/>
</dbReference>
<dbReference type="InterPro" id="IPR042515">
    <property type="entry name" value="NSP15_N_CoV"/>
</dbReference>
<dbReference type="InterPro" id="IPR044401">
    <property type="entry name" value="NSP15_NendoU_CoV"/>
</dbReference>
<dbReference type="InterPro" id="IPR009461">
    <property type="entry name" value="NSP16_CoV-like"/>
</dbReference>
<dbReference type="InterPro" id="IPR044384">
    <property type="entry name" value="NSP2_MHV-like"/>
</dbReference>
<dbReference type="InterPro" id="IPR043615">
    <property type="entry name" value="NSP2_N_CoV"/>
</dbReference>
<dbReference type="InterPro" id="IPR044381">
    <property type="entry name" value="NSP3_DPUP_MHV"/>
</dbReference>
<dbReference type="InterPro" id="IPR047567">
    <property type="entry name" value="NSP3_G2M_bCoV"/>
</dbReference>
<dbReference type="InterPro" id="IPR032592">
    <property type="entry name" value="NSP3_NAB_bCoV"/>
</dbReference>
<dbReference type="InterPro" id="IPR042570">
    <property type="entry name" value="NSP3_NAB_bCoV_sf"/>
</dbReference>
<dbReference type="InterPro" id="IPR044357">
    <property type="entry name" value="NSP3_Ubl1_dom_CoV"/>
</dbReference>
<dbReference type="InterPro" id="IPR044353">
    <property type="entry name" value="Nsp3_Ubl2_dom_CoV"/>
</dbReference>
<dbReference type="InterPro" id="IPR038083">
    <property type="entry name" value="NSP3A-like"/>
</dbReference>
<dbReference type="InterPro" id="IPR038123">
    <property type="entry name" value="NSP4_C_sf_CoV"/>
</dbReference>
<dbReference type="InterPro" id="IPR044367">
    <property type="entry name" value="NSP6_betaCoV"/>
</dbReference>
<dbReference type="InterPro" id="IPR043610">
    <property type="entry name" value="NSP6_CoV"/>
</dbReference>
<dbReference type="InterPro" id="IPR014828">
    <property type="entry name" value="NSP7_CoV"/>
</dbReference>
<dbReference type="InterPro" id="IPR037204">
    <property type="entry name" value="NSP7_sf_CoV"/>
</dbReference>
<dbReference type="InterPro" id="IPR014829">
    <property type="entry name" value="NSP8_CoV"/>
</dbReference>
<dbReference type="InterPro" id="IPR037230">
    <property type="entry name" value="NSP8_sf_CoV"/>
</dbReference>
<dbReference type="InterPro" id="IPR014822">
    <property type="entry name" value="NSP9_CoV"/>
</dbReference>
<dbReference type="InterPro" id="IPR036499">
    <property type="entry name" value="NSP9_sf_CoV"/>
</dbReference>
<dbReference type="InterPro" id="IPR027417">
    <property type="entry name" value="P-loop_NTPase"/>
</dbReference>
<dbReference type="InterPro" id="IPR002705">
    <property type="entry name" value="Pept_C30/C16_B_coronavir"/>
</dbReference>
<dbReference type="InterPro" id="IPR013016">
    <property type="entry name" value="Peptidase_C16_CoV"/>
</dbReference>
<dbReference type="InterPro" id="IPR008740">
    <property type="entry name" value="Peptidase_C30_CoV"/>
</dbReference>
<dbReference type="InterPro" id="IPR043477">
    <property type="entry name" value="Peptidase_C30_dom3_CoV"/>
</dbReference>
<dbReference type="InterPro" id="IPR009003">
    <property type="entry name" value="Peptidase_S1_PA"/>
</dbReference>
<dbReference type="InterPro" id="IPR043504">
    <property type="entry name" value="Peptidase_S1_PA_chymotrypsin"/>
</dbReference>
<dbReference type="InterPro" id="IPR043177">
    <property type="entry name" value="PLpro_N_sf_CoV"/>
</dbReference>
<dbReference type="InterPro" id="IPR043503">
    <property type="entry name" value="PLpro_palm_finger_dom_CoV"/>
</dbReference>
<dbReference type="InterPro" id="IPR043178">
    <property type="entry name" value="PLpro_thumb_sf_CoV"/>
</dbReference>
<dbReference type="InterPro" id="IPR046441">
    <property type="entry name" value="RdRp_CoV"/>
</dbReference>
<dbReference type="InterPro" id="IPR044347">
    <property type="entry name" value="RdRp_HCoV_HKU1-like"/>
</dbReference>
<dbReference type="InterPro" id="IPR009469">
    <property type="entry name" value="RdRp_N_CoV"/>
</dbReference>
<dbReference type="InterPro" id="IPR001205">
    <property type="entry name" value="RNA-dir_pol_C"/>
</dbReference>
<dbReference type="InterPro" id="IPR007094">
    <property type="entry name" value="RNA-dir_pol_PSvirus"/>
</dbReference>
<dbReference type="InterPro" id="IPR018995">
    <property type="entry name" value="RNA_synth_NSP10_CoV"/>
</dbReference>
<dbReference type="InterPro" id="IPR029063">
    <property type="entry name" value="SAM-dependent_MTases_sf"/>
</dbReference>
<dbReference type="PANTHER" id="PTHR43788">
    <property type="entry name" value="DNA2/NAM7 HELICASE FAMILY MEMBER"/>
    <property type="match status" value="1"/>
</dbReference>
<dbReference type="PANTHER" id="PTHR43788:SF16">
    <property type="entry name" value="HELICASE WITH ZINC FINGER 2"/>
    <property type="match status" value="1"/>
</dbReference>
<dbReference type="Pfam" id="PF13087">
    <property type="entry name" value="AAA_12"/>
    <property type="match status" value="1"/>
</dbReference>
<dbReference type="Pfam" id="PF13604">
    <property type="entry name" value="AAA_30"/>
    <property type="match status" value="1"/>
</dbReference>
<dbReference type="Pfam" id="PF11963">
    <property type="entry name" value="B-CoV_A_NSP1"/>
    <property type="match status" value="1"/>
</dbReference>
<dbReference type="Pfam" id="PF16251">
    <property type="entry name" value="bCoV_NAB"/>
    <property type="match status" value="1"/>
</dbReference>
<dbReference type="Pfam" id="PF06471">
    <property type="entry name" value="CoV_ExoN"/>
    <property type="match status" value="1"/>
</dbReference>
<dbReference type="Pfam" id="PF06460">
    <property type="entry name" value="CoV_Methyltr_2"/>
    <property type="match status" value="1"/>
</dbReference>
<dbReference type="Pfam" id="PF09401">
    <property type="entry name" value="CoV_NSP10"/>
    <property type="match status" value="1"/>
</dbReference>
<dbReference type="Pfam" id="PF20631">
    <property type="entry name" value="CoV_NSP13_1B"/>
    <property type="match status" value="1"/>
</dbReference>
<dbReference type="Pfam" id="PF20633">
    <property type="entry name" value="CoV_NSP13_stalk"/>
    <property type="match status" value="1"/>
</dbReference>
<dbReference type="Pfam" id="PF20632">
    <property type="entry name" value="CoV_NSP13_ZBD"/>
    <property type="match status" value="1"/>
</dbReference>
<dbReference type="Pfam" id="PF19215">
    <property type="entry name" value="CoV_NSP15_C"/>
    <property type="match status" value="1"/>
</dbReference>
<dbReference type="Pfam" id="PF19216">
    <property type="entry name" value="CoV_NSP15_M"/>
    <property type="match status" value="1"/>
</dbReference>
<dbReference type="Pfam" id="PF19219">
    <property type="entry name" value="CoV_NSP15_N"/>
    <property type="match status" value="1"/>
</dbReference>
<dbReference type="Pfam" id="PF19218">
    <property type="entry name" value="CoV_NSP3_C"/>
    <property type="match status" value="1"/>
</dbReference>
<dbReference type="Pfam" id="PF16348">
    <property type="entry name" value="CoV_NSP4_C"/>
    <property type="match status" value="1"/>
</dbReference>
<dbReference type="Pfam" id="PF19217">
    <property type="entry name" value="CoV_NSP4_N"/>
    <property type="match status" value="1"/>
</dbReference>
<dbReference type="Pfam" id="PF19213">
    <property type="entry name" value="CoV_NSP6"/>
    <property type="match status" value="1"/>
</dbReference>
<dbReference type="Pfam" id="PF08716">
    <property type="entry name" value="CoV_NSP7"/>
    <property type="match status" value="1"/>
</dbReference>
<dbReference type="Pfam" id="PF08717">
    <property type="entry name" value="CoV_NSP8"/>
    <property type="match status" value="1"/>
</dbReference>
<dbReference type="Pfam" id="PF08710">
    <property type="entry name" value="CoV_NSP9"/>
    <property type="match status" value="1"/>
</dbReference>
<dbReference type="Pfam" id="PF08715">
    <property type="entry name" value="CoV_peptidase"/>
    <property type="match status" value="1"/>
</dbReference>
<dbReference type="Pfam" id="PF06478">
    <property type="entry name" value="CoV_RPol_N"/>
    <property type="match status" value="1"/>
</dbReference>
<dbReference type="Pfam" id="PF01661">
    <property type="entry name" value="Macro"/>
    <property type="match status" value="1"/>
</dbReference>
<dbReference type="Pfam" id="PF22104">
    <property type="entry name" value="MHV_Nsp3_DPUP"/>
    <property type="match status" value="1"/>
</dbReference>
<dbReference type="Pfam" id="PF01831">
    <property type="entry name" value="Peptidase_C16"/>
    <property type="match status" value="1"/>
</dbReference>
<dbReference type="Pfam" id="PF05409">
    <property type="entry name" value="Peptidase_C30"/>
    <property type="match status" value="1"/>
</dbReference>
<dbReference type="Pfam" id="PF00680">
    <property type="entry name" value="RdRP_1"/>
    <property type="match status" value="1"/>
</dbReference>
<dbReference type="SMART" id="SM00506">
    <property type="entry name" value="A1pp"/>
    <property type="match status" value="1"/>
</dbReference>
<dbReference type="SUPFAM" id="SSF144246">
    <property type="entry name" value="Coronavirus NSP10-like"/>
    <property type="match status" value="1"/>
</dbReference>
<dbReference type="SUPFAM" id="SSF140367">
    <property type="entry name" value="Coronavirus NSP7-like"/>
    <property type="match status" value="1"/>
</dbReference>
<dbReference type="SUPFAM" id="SSF143076">
    <property type="entry name" value="Coronavirus NSP8-like"/>
    <property type="match status" value="1"/>
</dbReference>
<dbReference type="SUPFAM" id="SSF56672">
    <property type="entry name" value="DNA/RNA polymerases"/>
    <property type="match status" value="1"/>
</dbReference>
<dbReference type="SUPFAM" id="SSF142877">
    <property type="entry name" value="EndoU-like"/>
    <property type="match status" value="1"/>
</dbReference>
<dbReference type="SUPFAM" id="SSF52949">
    <property type="entry name" value="Macro domain-like"/>
    <property type="match status" value="1"/>
</dbReference>
<dbReference type="SUPFAM" id="SSF159936">
    <property type="entry name" value="NSP3A-like"/>
    <property type="match status" value="1"/>
</dbReference>
<dbReference type="SUPFAM" id="SSF52540">
    <property type="entry name" value="P-loop containing nucleoside triphosphate hydrolases"/>
    <property type="match status" value="1"/>
</dbReference>
<dbReference type="SUPFAM" id="SSF101816">
    <property type="entry name" value="Replicase NSP9"/>
    <property type="match status" value="1"/>
</dbReference>
<dbReference type="SUPFAM" id="SSF53335">
    <property type="entry name" value="S-adenosyl-L-methionine-dependent methyltransferases"/>
    <property type="match status" value="1"/>
</dbReference>
<dbReference type="SUPFAM" id="SSF50494">
    <property type="entry name" value="Trypsin-like serine proteases"/>
    <property type="match status" value="1"/>
</dbReference>
<dbReference type="PROSITE" id="PS51961">
    <property type="entry name" value="AV_NSP11N_COV_NSP15M"/>
    <property type="match status" value="1"/>
</dbReference>
<dbReference type="PROSITE" id="PS51963">
    <property type="entry name" value="BCOV_NSP1_C"/>
    <property type="match status" value="1"/>
</dbReference>
<dbReference type="PROSITE" id="PS51942">
    <property type="entry name" value="BCOV_NSP3C_C"/>
    <property type="match status" value="1"/>
</dbReference>
<dbReference type="PROSITE" id="PS51994">
    <property type="entry name" value="BCOV_NSP3E_G2M"/>
    <property type="match status" value="1"/>
</dbReference>
<dbReference type="PROSITE" id="PS51945">
    <property type="entry name" value="BCOV_NSP3E_NAB"/>
    <property type="match status" value="1"/>
</dbReference>
<dbReference type="PROSITE" id="PS51993">
    <property type="entry name" value="COV_3ECTO"/>
    <property type="match status" value="1"/>
</dbReference>
<dbReference type="PROSITE" id="PS51952">
    <property type="entry name" value="COV_EXON_MTASE_COACT"/>
    <property type="match status" value="1"/>
</dbReference>
<dbReference type="PROSITE" id="PS51954">
    <property type="entry name" value="COV_N7_MTASE"/>
    <property type="match status" value="1"/>
</dbReference>
<dbReference type="PROSITE" id="PS51962">
    <property type="entry name" value="COV_NSP1"/>
    <property type="match status" value="1"/>
</dbReference>
<dbReference type="PROSITE" id="PS52000">
    <property type="entry name" value="COV_NSP12_IF"/>
    <property type="match status" value="1"/>
</dbReference>
<dbReference type="PROSITE" id="PS51948">
    <property type="entry name" value="COV_NSP12_RDRP"/>
    <property type="match status" value="1"/>
</dbReference>
<dbReference type="PROSITE" id="PS51960">
    <property type="entry name" value="COV_NSP15_NTD"/>
    <property type="match status" value="1"/>
</dbReference>
<dbReference type="PROSITE" id="PS51991">
    <property type="entry name" value="COV_NSP2_C"/>
    <property type="match status" value="1"/>
</dbReference>
<dbReference type="PROSITE" id="PS51990">
    <property type="entry name" value="COV_NSP2_M"/>
    <property type="match status" value="1"/>
</dbReference>
<dbReference type="PROSITE" id="PS51989">
    <property type="entry name" value="COV_NSP2_N"/>
    <property type="match status" value="1"/>
</dbReference>
<dbReference type="PROSITE" id="PS51992">
    <property type="entry name" value="COV_NSP3_Y"/>
    <property type="match status" value="1"/>
</dbReference>
<dbReference type="PROSITE" id="PS51943">
    <property type="entry name" value="COV_NSP3A_UBL"/>
    <property type="match status" value="1"/>
</dbReference>
<dbReference type="PROSITE" id="PS51944">
    <property type="entry name" value="COV_NSP3D_UBL"/>
    <property type="match status" value="1"/>
</dbReference>
<dbReference type="PROSITE" id="PS51946">
    <property type="entry name" value="COV_NSP4C"/>
    <property type="match status" value="1"/>
</dbReference>
<dbReference type="PROSITE" id="PS51949">
    <property type="entry name" value="COV_NSP7"/>
    <property type="match status" value="1"/>
</dbReference>
<dbReference type="PROSITE" id="PS51950">
    <property type="entry name" value="COV_NSP8"/>
    <property type="match status" value="1"/>
</dbReference>
<dbReference type="PROSITE" id="PS51951">
    <property type="entry name" value="COV_NSP9_SSRNA_BD"/>
    <property type="match status" value="1"/>
</dbReference>
<dbReference type="PROSITE" id="PS51653">
    <property type="entry name" value="CV_ZBD"/>
    <property type="match status" value="1"/>
</dbReference>
<dbReference type="PROSITE" id="PS51442">
    <property type="entry name" value="M_PRO"/>
    <property type="match status" value="1"/>
</dbReference>
<dbReference type="PROSITE" id="PS51154">
    <property type="entry name" value="MACRO"/>
    <property type="match status" value="1"/>
</dbReference>
<dbReference type="PROSITE" id="PS51958">
    <property type="entry name" value="NENDOU"/>
    <property type="match status" value="1"/>
</dbReference>
<dbReference type="PROSITE" id="PS51947">
    <property type="entry name" value="NIRAN"/>
    <property type="match status" value="1"/>
</dbReference>
<dbReference type="PROSITE" id="PS51955">
    <property type="entry name" value="NIV_2_O_MTASE"/>
    <property type="match status" value="1"/>
</dbReference>
<dbReference type="PROSITE" id="PS51953">
    <property type="entry name" value="NIV_EXON"/>
    <property type="match status" value="1"/>
</dbReference>
<dbReference type="PROSITE" id="PS51124">
    <property type="entry name" value="PEPTIDASE_C16"/>
    <property type="match status" value="2"/>
</dbReference>
<dbReference type="PROSITE" id="PS51657">
    <property type="entry name" value="PSRV_HELICASE"/>
    <property type="match status" value="1"/>
</dbReference>
<dbReference type="PROSITE" id="PS50507">
    <property type="entry name" value="RDRP_SSRNA_POS"/>
    <property type="match status" value="1"/>
</dbReference>
<reference key="1">
    <citation type="journal article" date="2001" name="J. Gen. Virol.">
        <title>Comparison of genomic and predicted amino acid sequences of respiratory and enteric bovine coronaviruses isolated from the same animal with fatal shipping pneumonia.</title>
        <authorList>
            <person name="Chouljenko V.N."/>
            <person name="Lin X.Q."/>
            <person name="Storz J."/>
            <person name="Kousoulas K.G."/>
            <person name="Gorbalenya A.E."/>
        </authorList>
    </citation>
    <scope>NUCLEOTIDE SEQUENCE [GENOMIC RNA]</scope>
</reference>
<organism>
    <name type="scientific">Bovine coronavirus (strain 98TXSF-110-LUN)</name>
    <name type="common">BCoV-LUN</name>
    <name type="synonym">BCV</name>
    <dbReference type="NCBI Taxonomy" id="233264"/>
    <lineage>
        <taxon>Viruses</taxon>
        <taxon>Riboviria</taxon>
        <taxon>Orthornavirae</taxon>
        <taxon>Pisuviricota</taxon>
        <taxon>Pisoniviricetes</taxon>
        <taxon>Nidovirales</taxon>
        <taxon>Cornidovirineae</taxon>
        <taxon>Coronaviridae</taxon>
        <taxon>Orthocoronavirinae</taxon>
        <taxon>Betacoronavirus</taxon>
        <taxon>Embecovirus</taxon>
        <taxon>Betacoronavirus 1</taxon>
    </lineage>
</organism>
<evidence type="ECO:0000250" key="1"/>
<evidence type="ECO:0000250" key="2">
    <source>
        <dbReference type="UniProtKB" id="P0C6X7"/>
    </source>
</evidence>
<evidence type="ECO:0000250" key="3">
    <source>
        <dbReference type="UniProtKB" id="P0DTD1"/>
    </source>
</evidence>
<evidence type="ECO:0000255" key="4"/>
<evidence type="ECO:0000255" key="5">
    <source>
        <dbReference type="PROSITE-ProRule" id="PRU00214"/>
    </source>
</evidence>
<evidence type="ECO:0000255" key="6">
    <source>
        <dbReference type="PROSITE-ProRule" id="PRU00444"/>
    </source>
</evidence>
<evidence type="ECO:0000255" key="7">
    <source>
        <dbReference type="PROSITE-ProRule" id="PRU00490"/>
    </source>
</evidence>
<evidence type="ECO:0000255" key="8">
    <source>
        <dbReference type="PROSITE-ProRule" id="PRU00539"/>
    </source>
</evidence>
<evidence type="ECO:0000255" key="9">
    <source>
        <dbReference type="PROSITE-ProRule" id="PRU00772"/>
    </source>
</evidence>
<evidence type="ECO:0000255" key="10">
    <source>
        <dbReference type="PROSITE-ProRule" id="PRU00986"/>
    </source>
</evidence>
<evidence type="ECO:0000255" key="11">
    <source>
        <dbReference type="PROSITE-ProRule" id="PRU01289"/>
    </source>
</evidence>
<evidence type="ECO:0000255" key="12">
    <source>
        <dbReference type="PROSITE-ProRule" id="PRU01290"/>
    </source>
</evidence>
<evidence type="ECO:0000255" key="13">
    <source>
        <dbReference type="PROSITE-ProRule" id="PRU01291"/>
    </source>
</evidence>
<evidence type="ECO:0000255" key="14">
    <source>
        <dbReference type="PROSITE-ProRule" id="PRU01292"/>
    </source>
</evidence>
<evidence type="ECO:0000255" key="15">
    <source>
        <dbReference type="PROSITE-ProRule" id="PRU01293"/>
    </source>
</evidence>
<evidence type="ECO:0000255" key="16">
    <source>
        <dbReference type="PROSITE-ProRule" id="PRU01294"/>
    </source>
</evidence>
<evidence type="ECO:0000255" key="17">
    <source>
        <dbReference type="PROSITE-ProRule" id="PRU01295"/>
    </source>
</evidence>
<evidence type="ECO:0000255" key="18">
    <source>
        <dbReference type="PROSITE-ProRule" id="PRU01296"/>
    </source>
</evidence>
<evidence type="ECO:0000255" key="19">
    <source>
        <dbReference type="PROSITE-ProRule" id="PRU01297"/>
    </source>
</evidence>
<evidence type="ECO:0000255" key="20">
    <source>
        <dbReference type="PROSITE-ProRule" id="PRU01298"/>
    </source>
</evidence>
<evidence type="ECO:0000255" key="21">
    <source>
        <dbReference type="PROSITE-ProRule" id="PRU01299"/>
    </source>
</evidence>
<evidence type="ECO:0000255" key="22">
    <source>
        <dbReference type="PROSITE-ProRule" id="PRU01300"/>
    </source>
</evidence>
<evidence type="ECO:0000255" key="23">
    <source>
        <dbReference type="PROSITE-ProRule" id="PRU01303"/>
    </source>
</evidence>
<evidence type="ECO:0000255" key="24">
    <source>
        <dbReference type="PROSITE-ProRule" id="PRU01305"/>
    </source>
</evidence>
<evidence type="ECO:0000255" key="25">
    <source>
        <dbReference type="PROSITE-ProRule" id="PRU01306"/>
    </source>
</evidence>
<evidence type="ECO:0000255" key="26">
    <source>
        <dbReference type="PROSITE-ProRule" id="PRU01307"/>
    </source>
</evidence>
<evidence type="ECO:0000255" key="27">
    <source>
        <dbReference type="PROSITE-ProRule" id="PRU01308"/>
    </source>
</evidence>
<evidence type="ECO:0000255" key="28">
    <source>
        <dbReference type="PROSITE-ProRule" id="PRU01333"/>
    </source>
</evidence>
<evidence type="ECO:0000255" key="29">
    <source>
        <dbReference type="PROSITE-ProRule" id="PRU01334"/>
    </source>
</evidence>
<evidence type="ECO:0000255" key="30">
    <source>
        <dbReference type="PROSITE-ProRule" id="PRU01335"/>
    </source>
</evidence>
<evidence type="ECO:0000255" key="31">
    <source>
        <dbReference type="PROSITE-ProRule" id="PRU01336"/>
    </source>
</evidence>
<evidence type="ECO:0000255" key="32">
    <source>
        <dbReference type="PROSITE-ProRule" id="PRU01337"/>
    </source>
</evidence>
<evidence type="ECO:0000255" key="33">
    <source>
        <dbReference type="PROSITE-ProRule" id="PRU01338"/>
    </source>
</evidence>
<evidence type="ECO:0000255" key="34">
    <source>
        <dbReference type="PROSITE-ProRule" id="PRU01344"/>
    </source>
</evidence>
<evidence type="ECO:0000305" key="35"/>